<organism>
    <name type="scientific">Homo sapiens</name>
    <name type="common">Human</name>
    <dbReference type="NCBI Taxonomy" id="9606"/>
    <lineage>
        <taxon>Eukaryota</taxon>
        <taxon>Metazoa</taxon>
        <taxon>Chordata</taxon>
        <taxon>Craniata</taxon>
        <taxon>Vertebrata</taxon>
        <taxon>Euteleostomi</taxon>
        <taxon>Mammalia</taxon>
        <taxon>Eutheria</taxon>
        <taxon>Euarchontoglires</taxon>
        <taxon>Primates</taxon>
        <taxon>Haplorrhini</taxon>
        <taxon>Catarrhini</taxon>
        <taxon>Hominidae</taxon>
        <taxon>Homo</taxon>
    </lineage>
</organism>
<protein>
    <recommendedName>
        <fullName evidence="41">Phosphatidylcholine translocator ABCB4</fullName>
        <ecNumber evidence="2">7.6.2.1</ecNumber>
    </recommendedName>
    <alternativeName>
        <fullName evidence="43">ATP-binding cassette sub-family B member 4</fullName>
    </alternativeName>
    <alternativeName>
        <fullName evidence="39">Multidrug resistance protein 3</fullName>
    </alternativeName>
    <alternativeName>
        <fullName evidence="3">P-glycoprotein 3</fullName>
    </alternativeName>
</protein>
<name>MDR3_HUMAN</name>
<reference key="1">
    <citation type="journal article" date="1988" name="Gene">
        <title>Sequence of mdr3 cDNA encoding a human P-glycoprotein.</title>
        <authorList>
            <person name="van der Bliek A.M."/>
            <person name="Kooiman P.M."/>
            <person name="Schneider C."/>
            <person name="Borst P."/>
        </authorList>
    </citation>
    <scope>NUCLEOTIDE SEQUENCE [MRNA] (ISOFORM 2)</scope>
</reference>
<reference key="2">
    <citation type="submission" date="2006-10" db="EMBL/GenBank/DDBJ databases">
        <authorList>
            <consortium name="NIEHS SNPs program"/>
        </authorList>
    </citation>
    <scope>NUCLEOTIDE SEQUENCE [GENOMIC DNA]</scope>
    <scope>VARIANTS GBD1 ASP-528 AND GLN-788</scope>
    <scope>VARIANTS VAL-238; VAL-263; GLN-590; ASN-651 AND GLY-652</scope>
</reference>
<reference key="3">
    <citation type="journal article" date="2003" name="Nature">
        <title>The DNA sequence of human chromosome 7.</title>
        <authorList>
            <person name="Hillier L.W."/>
            <person name="Fulton R.S."/>
            <person name="Fulton L.A."/>
            <person name="Graves T.A."/>
            <person name="Pepin K.H."/>
            <person name="Wagner-McPherson C."/>
            <person name="Layman D."/>
            <person name="Maas J."/>
            <person name="Jaeger S."/>
            <person name="Walker R."/>
            <person name="Wylie K."/>
            <person name="Sekhon M."/>
            <person name="Becker M.C."/>
            <person name="O'Laughlin M.D."/>
            <person name="Schaller M.E."/>
            <person name="Fewell G.A."/>
            <person name="Delehaunty K.D."/>
            <person name="Miner T.L."/>
            <person name="Nash W.E."/>
            <person name="Cordes M."/>
            <person name="Du H."/>
            <person name="Sun H."/>
            <person name="Edwards J."/>
            <person name="Bradshaw-Cordum H."/>
            <person name="Ali J."/>
            <person name="Andrews S."/>
            <person name="Isak A."/>
            <person name="Vanbrunt A."/>
            <person name="Nguyen C."/>
            <person name="Du F."/>
            <person name="Lamar B."/>
            <person name="Courtney L."/>
            <person name="Kalicki J."/>
            <person name="Ozersky P."/>
            <person name="Bielicki L."/>
            <person name="Scott K."/>
            <person name="Holmes A."/>
            <person name="Harkins R."/>
            <person name="Harris A."/>
            <person name="Strong C.M."/>
            <person name="Hou S."/>
            <person name="Tomlinson C."/>
            <person name="Dauphin-Kohlberg S."/>
            <person name="Kozlowicz-Reilly A."/>
            <person name="Leonard S."/>
            <person name="Rohlfing T."/>
            <person name="Rock S.M."/>
            <person name="Tin-Wollam A.-M."/>
            <person name="Abbott A."/>
            <person name="Minx P."/>
            <person name="Maupin R."/>
            <person name="Strowmatt C."/>
            <person name="Latreille P."/>
            <person name="Miller N."/>
            <person name="Johnson D."/>
            <person name="Murray J."/>
            <person name="Woessner J.P."/>
            <person name="Wendl M.C."/>
            <person name="Yang S.-P."/>
            <person name="Schultz B.R."/>
            <person name="Wallis J.W."/>
            <person name="Spieth J."/>
            <person name="Bieri T.A."/>
            <person name="Nelson J.O."/>
            <person name="Berkowicz N."/>
            <person name="Wohldmann P.E."/>
            <person name="Cook L.L."/>
            <person name="Hickenbotham M.T."/>
            <person name="Eldred J."/>
            <person name="Williams D."/>
            <person name="Bedell J.A."/>
            <person name="Mardis E.R."/>
            <person name="Clifton S.W."/>
            <person name="Chissoe S.L."/>
            <person name="Marra M.A."/>
            <person name="Raymond C."/>
            <person name="Haugen E."/>
            <person name="Gillett W."/>
            <person name="Zhou Y."/>
            <person name="James R."/>
            <person name="Phelps K."/>
            <person name="Iadanoto S."/>
            <person name="Bubb K."/>
            <person name="Simms E."/>
            <person name="Levy R."/>
            <person name="Clendenning J."/>
            <person name="Kaul R."/>
            <person name="Kent W.J."/>
            <person name="Furey T.S."/>
            <person name="Baertsch R.A."/>
            <person name="Brent M.R."/>
            <person name="Keibler E."/>
            <person name="Flicek P."/>
            <person name="Bork P."/>
            <person name="Suyama M."/>
            <person name="Bailey J.A."/>
            <person name="Portnoy M.E."/>
            <person name="Torrents D."/>
            <person name="Chinwalla A.T."/>
            <person name="Gish W.R."/>
            <person name="Eddy S.R."/>
            <person name="McPherson J.D."/>
            <person name="Olson M.V."/>
            <person name="Eichler E.E."/>
            <person name="Green E.D."/>
            <person name="Waterston R.H."/>
            <person name="Wilson R.K."/>
        </authorList>
    </citation>
    <scope>NUCLEOTIDE SEQUENCE [LARGE SCALE GENOMIC DNA]</scope>
</reference>
<reference key="4">
    <citation type="journal article" date="2003" name="Science">
        <title>Human chromosome 7: DNA sequence and biology.</title>
        <authorList>
            <person name="Scherer S.W."/>
            <person name="Cheung J."/>
            <person name="MacDonald J.R."/>
            <person name="Osborne L.R."/>
            <person name="Nakabayashi K."/>
            <person name="Herbrick J.-A."/>
            <person name="Carson A.R."/>
            <person name="Parker-Katiraee L."/>
            <person name="Skaug J."/>
            <person name="Khaja R."/>
            <person name="Zhang J."/>
            <person name="Hudek A.K."/>
            <person name="Li M."/>
            <person name="Haddad M."/>
            <person name="Duggan G.E."/>
            <person name="Fernandez B.A."/>
            <person name="Kanematsu E."/>
            <person name="Gentles S."/>
            <person name="Christopoulos C.C."/>
            <person name="Choufani S."/>
            <person name="Kwasnicka D."/>
            <person name="Zheng X.H."/>
            <person name="Lai Z."/>
            <person name="Nusskern D.R."/>
            <person name="Zhang Q."/>
            <person name="Gu Z."/>
            <person name="Lu F."/>
            <person name="Zeesman S."/>
            <person name="Nowaczyk M.J."/>
            <person name="Teshima I."/>
            <person name="Chitayat D."/>
            <person name="Shuman C."/>
            <person name="Weksberg R."/>
            <person name="Zackai E.H."/>
            <person name="Grebe T.A."/>
            <person name="Cox S.R."/>
            <person name="Kirkpatrick S.J."/>
            <person name="Rahman N."/>
            <person name="Friedman J.M."/>
            <person name="Heng H.H.Q."/>
            <person name="Pelicci P.G."/>
            <person name="Lo-Coco F."/>
            <person name="Belloni E."/>
            <person name="Shaffer L.G."/>
            <person name="Pober B."/>
            <person name="Morton C.C."/>
            <person name="Gusella J.F."/>
            <person name="Bruns G.A.P."/>
            <person name="Korf B.R."/>
            <person name="Quade B.J."/>
            <person name="Ligon A.H."/>
            <person name="Ferguson H."/>
            <person name="Higgins A.W."/>
            <person name="Leach N.T."/>
            <person name="Herrick S.R."/>
            <person name="Lemyre E."/>
            <person name="Farra C.G."/>
            <person name="Kim H.-G."/>
            <person name="Summers A.M."/>
            <person name="Gripp K.W."/>
            <person name="Roberts W."/>
            <person name="Szatmari P."/>
            <person name="Winsor E.J.T."/>
            <person name="Grzeschik K.-H."/>
            <person name="Teebi A."/>
            <person name="Minassian B.A."/>
            <person name="Kere J."/>
            <person name="Armengol L."/>
            <person name="Pujana M.A."/>
            <person name="Estivill X."/>
            <person name="Wilson M.D."/>
            <person name="Koop B.F."/>
            <person name="Tosi S."/>
            <person name="Moore G.E."/>
            <person name="Boright A.P."/>
            <person name="Zlotorynski E."/>
            <person name="Kerem B."/>
            <person name="Kroisel P.M."/>
            <person name="Petek E."/>
            <person name="Oscier D.G."/>
            <person name="Mould S.J."/>
            <person name="Doehner H."/>
            <person name="Doehner K."/>
            <person name="Rommens J.M."/>
            <person name="Vincent J.B."/>
            <person name="Venter J.C."/>
            <person name="Li P.W."/>
            <person name="Mural R.J."/>
            <person name="Adams M.D."/>
            <person name="Tsui L.-C."/>
        </authorList>
    </citation>
    <scope>NUCLEOTIDE SEQUENCE [LARGE SCALE GENOMIC DNA]</scope>
</reference>
<reference key="5">
    <citation type="submission" date="2005-09" db="EMBL/GenBank/DDBJ databases">
        <authorList>
            <person name="Mural R.J."/>
            <person name="Istrail S."/>
            <person name="Sutton G.G."/>
            <person name="Florea L."/>
            <person name="Halpern A.L."/>
            <person name="Mobarry C.M."/>
            <person name="Lippert R."/>
            <person name="Walenz B."/>
            <person name="Shatkay H."/>
            <person name="Dew I."/>
            <person name="Miller J.R."/>
            <person name="Flanigan M.J."/>
            <person name="Edwards N.J."/>
            <person name="Bolanos R."/>
            <person name="Fasulo D."/>
            <person name="Halldorsson B.V."/>
            <person name="Hannenhalli S."/>
            <person name="Turner R."/>
            <person name="Yooseph S."/>
            <person name="Lu F."/>
            <person name="Nusskern D.R."/>
            <person name="Shue B.C."/>
            <person name="Zheng X.H."/>
            <person name="Zhong F."/>
            <person name="Delcher A.L."/>
            <person name="Huson D.H."/>
            <person name="Kravitz S.A."/>
            <person name="Mouchard L."/>
            <person name="Reinert K."/>
            <person name="Remington K.A."/>
            <person name="Clark A.G."/>
            <person name="Waterman M.S."/>
            <person name="Eichler E.E."/>
            <person name="Adams M.D."/>
            <person name="Hunkapiller M.W."/>
            <person name="Myers E.W."/>
            <person name="Venter J.C."/>
        </authorList>
    </citation>
    <scope>NUCLEOTIDE SEQUENCE [LARGE SCALE GENOMIC DNA]</scope>
</reference>
<reference key="6">
    <citation type="journal article" date="1995" name="Biochim. Biophys. Acta">
        <title>Characterization of the promoter region of the human MDR3 P-glycoprotein gene.</title>
        <authorList>
            <person name="Smit J.J."/>
            <person name="Mol C.A."/>
            <person name="van Deemter L."/>
            <person name="Wagenaar E."/>
            <person name="Schinkel A.H."/>
            <person name="Borst P."/>
        </authorList>
    </citation>
    <scope>NUCLEOTIDE SEQUENCE [MRNA] OF 1-72 (ISOFORM 1)</scope>
    <source>
        <tissue>Liver</tissue>
    </source>
</reference>
<reference key="7">
    <citation type="journal article" date="1987" name="EMBO J.">
        <title>The human mdr3 gene encodes a novel P-glycoprotein homologue and gives rise to alternatively spliced mRNAs in liver.</title>
        <authorList>
            <person name="van der Bliek A.M."/>
            <person name="Baas F."/>
            <person name="ten Houte de Lange T."/>
            <person name="Kooiman P.M."/>
            <person name="van der Velde-Koerts T."/>
            <person name="Borst P."/>
        </authorList>
    </citation>
    <scope>NUCLEOTIDE SEQUENCE [MRNA] OF 856-1286 (ISOFORM 1)</scope>
    <scope>ALTERNATIVE SPLICING</scope>
</reference>
<reference key="8">
    <citation type="journal article" date="1991" name="J. Biol. Chem.">
        <title>Structure of the human MDR3 gene and physical mapping of the human MDR locus.</title>
        <authorList>
            <person name="Lincke C.R."/>
            <person name="Smit J.J.M."/>
            <person name="van der Velde-Koerts T."/>
            <person name="Borst P."/>
        </authorList>
    </citation>
    <scope>GENE STRUCTURE</scope>
</reference>
<reference key="9">
    <citation type="journal article" date="1994" name="FEBS Lett.">
        <title>The human MDR3 P-glycoprotein promotes translocation of phosphatidylcholine through the plasma membrane of fibroblasts from transgenic mice.</title>
        <authorList>
            <person name="Smith A.J."/>
            <person name="Timmermans-Hereijgers J.L."/>
            <person name="Roelofsen B."/>
            <person name="Wirtz K.W."/>
            <person name="van Blitterswijk W.J."/>
            <person name="Smit J.J."/>
            <person name="Schinkel A.H."/>
            <person name="Borst P."/>
        </authorList>
    </citation>
    <scope>FUNCTION</scope>
</reference>
<reference key="10">
    <citation type="journal article" date="1996" name="Cell">
        <title>MDR1 P-glycoprotein is a lipid translocase of broad specificity, while MDR3 P-glycoprotein specifically translocates phosphatidylcholine.</title>
        <authorList>
            <person name="van Helvoort A."/>
            <person name="Smith A.J."/>
            <person name="Sprong H."/>
            <person name="Fritzsche I."/>
            <person name="Schinkel A.H."/>
            <person name="Borst P."/>
            <person name="van Meer G."/>
        </authorList>
    </citation>
    <scope>FUNCTION</scope>
    <scope>SUBCELLULAR LOCATION</scope>
    <scope>CATALYTIC ACTIVITY</scope>
</reference>
<reference key="11">
    <citation type="journal article" date="1997" name="J. Clin. Invest.">
        <title>Hepatic secretion of phospholipid vesicles in the mouse critically depends on mdr2 or MDR3 P-glycoprotein expression. Visualization by electron microscopy.</title>
        <authorList>
            <person name="Crawford A.R."/>
            <person name="Smith A.J."/>
            <person name="Hatch V.C."/>
            <person name="Oude Elferink R.P."/>
            <person name="Borst P."/>
            <person name="Crawford J.M."/>
        </authorList>
    </citation>
    <scope>FUNCTION</scope>
</reference>
<reference key="12">
    <citation type="journal article" date="1998" name="Proc. Natl. Acad. Sci. U.S.A.">
        <title>Mutations in the MDR3 gene cause progressive familial intrahepatic cholestasis.</title>
        <authorList>
            <person name="de Vree J.M.L."/>
            <person name="Jacquemin E."/>
            <person name="Sturm E."/>
            <person name="Cresteil D."/>
            <person name="Bosma P.J."/>
            <person name="Aten J."/>
            <person name="Deleuze J.-F."/>
            <person name="Desrochers M."/>
            <person name="Burdelski M."/>
            <person name="Bernard O."/>
            <person name="Oude Elferink R.P.J."/>
            <person name="Hadchouel M."/>
        </authorList>
    </citation>
    <scope>INVOLVEMENT IN PFIC3</scope>
</reference>
<reference key="13">
    <citation type="journal article" date="2004" name="J. Lipid Res.">
        <title>Bezafibrate stimulates canalicular localization of NBD-labeled PC in HepG2 cells by PPARalpha-mediated redistribution of ABCB4.</title>
        <authorList>
            <person name="Shoda J."/>
            <person name="Inada Y."/>
            <person name="Tsuji A."/>
            <person name="Kusama H."/>
            <person name="Ueda T."/>
            <person name="Ikegami T."/>
            <person name="Suzuki H."/>
            <person name="Sugiyama Y."/>
            <person name="Cohen D.E."/>
            <person name="Tanaka N."/>
        </authorList>
    </citation>
    <scope>SUBCELLULAR LOCATION</scope>
    <scope>INDUCTION</scope>
</reference>
<reference key="14">
    <citation type="journal article" date="2007" name="Hepatology">
        <title>Bile salt-dependent efflux of cellular phospholipids mediated by ATP binding cassette protein B4.</title>
        <authorList>
            <person name="Morita S.Y."/>
            <person name="Kobayashi A."/>
            <person name="Takanezawa Y."/>
            <person name="Kioka N."/>
            <person name="Handa T."/>
            <person name="Arai H."/>
            <person name="Matsuo M."/>
            <person name="Ueda K."/>
        </authorList>
    </citation>
    <scope>FUNCTION</scope>
    <scope>ACTIVITY REGULATION</scope>
    <scope>GLYCOSYLATION</scope>
    <scope>MUTAGENESIS OF LYS-435 AND LYS-1075</scope>
</reference>
<reference key="15">
    <citation type="journal article" date="2009" name="Hepatol. Res.">
        <title>Receptor for activated C-kinase 1 regulates the cellular localization and function of ABCB4.</title>
        <authorList>
            <person name="Ikebuchi Y."/>
            <person name="Takada T."/>
            <person name="Ito K."/>
            <person name="Yoshikado T."/>
            <person name="Anzai N."/>
            <person name="Kanai Y."/>
            <person name="Suzuki H."/>
        </authorList>
    </citation>
    <scope>INTERACTION WITH RACK1</scope>
    <scope>SUBCELLULAR LOCATION</scope>
</reference>
<reference key="16">
    <citation type="journal article" date="2011" name="Gastroenterology">
        <title>Complementary functions of the flippase ATP8B1 and the floppase ABCB4 in maintaining canalicular membrane integrity.</title>
        <authorList>
            <person name="Groen A."/>
            <person name="Romero M.R."/>
            <person name="Kunne C."/>
            <person name="Hoosdally S.J."/>
            <person name="Dixon P.H."/>
            <person name="Wooding C."/>
            <person name="Williamson C."/>
            <person name="Seppen J."/>
            <person name="Van den Oever K."/>
            <person name="Mok K.S."/>
            <person name="Paulusma C.C."/>
            <person name="Linton K.J."/>
            <person name="Oude Elferink R.P."/>
        </authorList>
    </citation>
    <scope>FUNCTION</scope>
    <scope>GLYCOSYLATION</scope>
    <scope>SUBCELLULAR LOCATION</scope>
</reference>
<reference key="17">
    <citation type="journal article" date="2013" name="J. Lipid Res.">
        <title>Bile salt-stimulated phospholipid efflux mediated by ABCB4 localized in nonraft membranes.</title>
        <authorList>
            <person name="Morita S.Y."/>
            <person name="Tsuda T."/>
            <person name="Horikami M."/>
            <person name="Teraoka R."/>
            <person name="Kitagawa S."/>
            <person name="Terada T."/>
        </authorList>
    </citation>
    <scope>FUNCTION</scope>
    <scope>SUBCELLULAR LOCATION</scope>
    <scope>ACTIVITY REGULATION</scope>
</reference>
<reference key="18">
    <citation type="journal article" date="2014" name="Hepatology">
        <title>Peroxisome proliferator-activated receptor alpha activates human multidrug resistance transporter 3/ATP-binding cassette protein subfamily B4 transcription and increases rat biliary phosphatidylcholine secretion.</title>
        <authorList>
            <person name="Ghonem N.S."/>
            <person name="Ananthanarayanan M."/>
            <person name="Soroka C.J."/>
            <person name="Boyer J.L."/>
        </authorList>
    </citation>
    <scope>SUBCELLULAR LOCATION</scope>
    <scope>INDUCTION</scope>
</reference>
<reference key="19">
    <citation type="journal article" date="2014" name="Hepatology">
        <title>Molecular mechanistic explanation for the spectrum of cholestatic disease caused by the S320F variant of ABCB4.</title>
        <authorList>
            <person name="Andress E.J."/>
            <person name="Nicolaou M."/>
            <person name="Romero M.R."/>
            <person name="Naik S."/>
            <person name="Dixon P.H."/>
            <person name="Williamson C."/>
            <person name="Linton K.J."/>
        </authorList>
    </citation>
    <scope>FUNCTION</scope>
    <scope>SUBCELLULAR LOCATION</scope>
    <scope>CHARACTERIZATION OF VARIANTS PFIC3 VAL-286 AND PHE-320</scope>
    <scope>MUTAGENESIS OF ALA-953</scope>
</reference>
<reference evidence="44" key="20">
    <citation type="journal article" date="2020" name="Nat. Struct. Biol.">
        <title>Structure of the human lipid exporter ABCB4 in a lipid environment.</title>
        <authorList>
            <person name="Olsen J.A."/>
            <person name="Alam A."/>
            <person name="Kowal J."/>
            <person name="Stieger B."/>
            <person name="Locher K.P."/>
        </authorList>
    </citation>
    <scope>STRUCTURE BY ELECTRON MICROSCOPY (3.20 ANGSTROMS) IN COMPLEX WITH ATP</scope>
    <scope>FUNCTION</scope>
    <scope>CATALYTIC ACTIVITY (ISOFORM 2)</scope>
    <scope>MUTAGENESIS OF GLU-558; VAL-985; HIS-989 AND ALA-990</scope>
    <scope>BIOPHYSICOCHEMICAL PROPERTIES</scope>
</reference>
<reference key="21">
    <citation type="journal article" date="2000" name="Hum. Mol. Genet.">
        <title>Heterozygous MDR3 missense mutation associated with intrahepatic cholestasis of pregnancy: evidence for a defect in protein trafficking.</title>
        <authorList>
            <person name="Dixon P.H."/>
            <person name="Weerasekera N."/>
            <person name="Linton K.J."/>
            <person name="Donaldson O."/>
            <person name="Chambers J."/>
            <person name="Egginton E."/>
            <person name="Weaver J."/>
            <person name="Nelson-Piercy C."/>
            <person name="de Swiet M."/>
            <person name="Warnes G."/>
            <person name="Elias E."/>
            <person name="Higgins C.F."/>
            <person name="Johnston D.G."/>
            <person name="McCarthy M.I."/>
            <person name="Williamson C."/>
        </authorList>
    </citation>
    <scope>VARIANT ICP3 ASP-546</scope>
    <scope>CHARACTERIZATION OF VARIANT ICP3 ASP-546</scope>
</reference>
<reference key="22">
    <citation type="journal article" date="2001" name="Gastroenterology">
        <title>The wide spectrum of multidrug resistance 3 deficiency: from neonatal cholestasis to cirrhosis of adulthood.</title>
        <authorList>
            <person name="Jacquemin E."/>
            <person name="De Vree J.M.L."/>
            <person name="Cresteil D."/>
            <person name="Sokal E.M."/>
            <person name="Sturm E."/>
            <person name="Dumont M."/>
            <person name="Scheffer G.L."/>
            <person name="Paul M."/>
            <person name="Burdelski M."/>
            <person name="Bosma P.J."/>
            <person name="Bernard O."/>
            <person name="Hadchouel M."/>
            <person name="Elferink R.P."/>
        </authorList>
    </citation>
    <scope>VARIANTS PFIC3 ARG-138; ILE-346; GLY-395; ALA-424; MET-425; PHE-541; ARG-556; GLY-564; SER-711 AND SER-983</scope>
    <scope>VARIANT GLY-652</scope>
</reference>
<reference key="23">
    <citation type="journal article" date="2001" name="Gastroenterology">
        <title>MDR3 gene defect in adults with symptomatic intrahepatic and gallbladder cholesterol cholelithiasis.</title>
        <authorList>
            <person name="Rosmorduc O."/>
            <person name="Hermelin B."/>
            <person name="Poupon R."/>
        </authorList>
    </citation>
    <scope>VARIANTS GBD1 PHE-320 AND SER-1168</scope>
    <scope>VARIANT ALA-175</scope>
</reference>
<reference key="24">
    <citation type="journal article" date="2003" name="Gastroenterology">
        <title>A multidrug resistance 3 gene mutation causing cholelithiasis, cholestasis of pregnancy, and adulthood biliary cirrhosis.</title>
        <authorList>
            <person name="Lucena J.-F."/>
            <person name="Herrero J.I."/>
            <person name="Quiroga J."/>
            <person name="Sangro B."/>
            <person name="Garcia-Foncillas J."/>
            <person name="Zabalegui N."/>
            <person name="Sola J."/>
            <person name="Herraiz M."/>
            <person name="Medina J.F."/>
            <person name="Prieto J."/>
        </authorList>
    </citation>
    <scope>VARIANT PFIC3 ASP-535</scope>
</reference>
<reference key="25">
    <citation type="journal article" date="2003" name="Gastroenterology">
        <title>ABCB4 gene mutation-associated cholelithiasis in adults.</title>
        <authorList>
            <person name="Rosmorduc O."/>
            <person name="Hermelin B."/>
            <person name="Boelle P.Y."/>
            <person name="Parc R."/>
            <person name="Taboury J."/>
            <person name="Poupon R."/>
        </authorList>
    </citation>
    <scope>VARIANTS GBD1 ILE-165; THR-301; PHE-320; ASP-528; GLN-591; GLN-788 AND SER-1168</scope>
    <scope>VARIANTS ALA-175; GLN-590; GLY-652; SER-742 AND THR-934</scope>
</reference>
<reference key="26">
    <citation type="journal article" date="2003" name="J. Med. Genet.">
        <title>ABCB4 gene sequence variation in women with intrahepatic cholestasis of pregnancy.</title>
        <authorList>
            <person name="Muellenbach R."/>
            <person name="Linton K.J."/>
            <person name="Wiltshire S."/>
            <person name="Weerasekera N."/>
            <person name="Chambers J."/>
            <person name="Elias E."/>
            <person name="Higgins C.F."/>
            <person name="Johnston D.G."/>
            <person name="McCarthy M.I."/>
            <person name="Williamson C."/>
        </authorList>
    </citation>
    <scope>VARIANT ICP3 LYS-150</scope>
    <scope>VARIANT GLY-652</scope>
</reference>
<reference key="27">
    <citation type="journal article" date="2004" name="Pharmacogenetics">
        <title>Sequence analysis of bile salt export pump (ABCB11) and multidrug resistance p-glycoprotein 3 (ABCB4, MDR3) in patients with intrahepatic cholestasis of pregnancy.</title>
        <authorList>
            <person name="Pauli-Magnus C."/>
            <person name="Lang T."/>
            <person name="Meier Y."/>
            <person name="Zodan-Marin T."/>
            <person name="Jung D."/>
            <person name="Breymann C."/>
            <person name="Zimmermann R."/>
            <person name="Kenngott S."/>
            <person name="Beuers U."/>
            <person name="Reichel C."/>
            <person name="Kerb R."/>
            <person name="Penger A."/>
            <person name="Meier P.J."/>
            <person name="Kullak-Ublick G.A."/>
        </authorList>
    </citation>
    <scope>VARIANTS ALA-175; GLY-652 AND MET-775</scope>
    <scope>VARIANTS ICP3 PHE-320; ASP-528 AND GLU-762</scope>
</reference>
<reference key="28">
    <citation type="journal article" date="2006" name="Drug Metab. Dispos.">
        <title>Genetic variability, haplotype structures, and ethnic diversity of hepatic transporters MDR3 (ABCB4) and bile salt export pump (ABCB11).</title>
        <authorList>
            <person name="Lang T."/>
            <person name="Haberl M."/>
            <person name="Jung D."/>
            <person name="Drescher A."/>
            <person name="Schlagenhaufer R."/>
            <person name="Keil A."/>
            <person name="Mornhinweg E."/>
            <person name="Stieger B."/>
            <person name="Kullak-Ublick G.A."/>
            <person name="Kerb R."/>
        </authorList>
    </citation>
    <scope>VARIANTS GLU-87; SER-95; ALA-175; VAL-367; GLY-450; GLN-590 AND GLY-652</scope>
</reference>
<reference key="29">
    <citation type="journal article" date="2007" name="Eur. J. Hum. Genet.">
        <title>Molecular characterization and structural implications of 25 new ABCB4 mutations in progressive familial intrahepatic cholestasis type 3 (PFIC3).</title>
        <authorList>
            <person name="Degiorgio D."/>
            <person name="Colombo C."/>
            <person name="Seia M."/>
            <person name="Porcaro L."/>
            <person name="Costantino L."/>
            <person name="Zazzeron L."/>
            <person name="Bordo D."/>
            <person name="Coviello D.A."/>
        </authorList>
    </citation>
    <scope>VARIANTS PFIC3 GLU-126; PRO-250; VAL-286; PHE-320; LEU-357; VAL-364; HIS-403; ALA-475; THR-511; LYS-558; ALA-593; VAL-630; PRO-701; ILE-715; GLU-723; THR-726; VAL-737; ASP-840; SER-954 AND THR-1193</scope>
    <scope>VARIANTS ALA-175; GLN-590 AND MET-775</scope>
</reference>
<reference key="30">
    <citation type="journal article" date="2007" name="Pharmacogenet. Genomics">
        <title>Mutations and polymorphisms in the bile salt export pump and the multidrug resistance protein 3 associated with drug-induced liver injury.</title>
        <authorList>
            <person name="Lang C."/>
            <person name="Meier Y."/>
            <person name="Stieger B."/>
            <person name="Beuers U."/>
            <person name="Lang T."/>
            <person name="Kerb R."/>
            <person name="Kullak-Ublick G.A."/>
            <person name="Meier P.J."/>
            <person name="Pauli-Magnus C."/>
        </authorList>
    </citation>
    <scope>VARIANTS ALA-175; GLN-590; GLY-652; LEU-764 AND GLN-1082</scope>
</reference>
<reference key="31">
    <citation type="journal article" date="2009" name="Dig. Liver Dis.">
        <title>A new splicing site mutation of the ABCB4 gene in intrahepatic cholestasis of pregnancy with raised serum gamma-GT.</title>
        <authorList>
            <person name="Tavian D."/>
            <person name="Degiorgio D."/>
            <person name="Roncaglia N."/>
            <person name="Vergani P."/>
            <person name="Cameroni I."/>
            <person name="Colombo R."/>
            <person name="Coviello D.A."/>
        </authorList>
    </citation>
    <scope>VARIANTS GLN-590 AND GLY-652</scope>
</reference>
<reference key="32">
    <citation type="journal article" date="2011" name="J. Pediatr. Gastroenterol. Nutr.">
        <title>Clinical features and genotype-phenotype correlations in children with progressive familial intrahepatic cholestasis type 3 related to ABCB4 mutations.</title>
        <authorList>
            <person name="Colombo C."/>
            <person name="Vajro P."/>
            <person name="Degiorgio D."/>
            <person name="Coviello D.A."/>
            <person name="Costantino L."/>
            <person name="Tornillo L."/>
            <person name="Motta V."/>
            <person name="Consonni D."/>
            <person name="Maggiore G."/>
            <person name="Balli F."/>
            <person name="Berardi S."/>
            <person name="Calacoci M."/>
            <person name="Castellano E."/>
            <person name="Marazzi M.G."/>
            <person name="Gaslini G."/>
            <person name="D'Antiga L."/>
            <person name="Ferretti E."/>
            <person name="Giannini A."/>
            <person name="Indolfi G."/>
            <person name="Iorio R."/>
            <person name="Martelossi S."/>
            <person name="Moretti C."/>
            <person name="Nebbia G."/>
            <person name="Oliveri F."/>
            <person name="Poggiani C."/>
            <person name="Raggi M."/>
            <person name="Riva S."/>
            <person name="Sciveres M."/>
            <person name="Torre G."/>
            <person name="Zancan L."/>
        </authorList>
    </citation>
    <scope>VARIANTS PFIC3 ARG-70; VAL-73; PHE-320 AND HIS-403</scope>
    <scope>VARIANT GLY-652</scope>
</reference>
<reference key="33">
    <citation type="journal article" date="2012" name="Virchows Arch.">
        <title>Aspects of liver pathology in adult patients with MDR3/ABCB4 gene mutations.</title>
        <authorList>
            <person name="Wendum D."/>
            <person name="Barbu V."/>
            <person name="Rosmorduc O."/>
            <person name="Arrive L."/>
            <person name="Flejou J.F."/>
            <person name="Poupon R."/>
        </authorList>
    </citation>
    <scope>VARIANTS GBD1 MET-34; GLY-47; VAL-286 AND ASP-528</scope>
    <scope>VARIANTS GLN-47; ALA-175; PHE-320; GLN-406; MET-775 AND THR-964</scope>
</reference>
<reference key="34">
    <citation type="journal article" date="2013" name="Hepatology">
        <title>Genotype-phenotype relationships in the low-phospholipid-associated cholelithiasis syndrome: a study of 156 consecutive patients.</title>
        <authorList>
            <person name="Poupon R."/>
            <person name="Rosmorduc O."/>
            <person name="Boelle P.Y."/>
            <person name="Chretien Y."/>
            <person name="Corpechot C."/>
            <person name="Chazouilleres O."/>
            <person name="Housset C."/>
            <person name="Barbu V."/>
        </authorList>
    </citation>
    <scope>VARIANTS GBD1 GLY-47; HIS-71; VAL-73; CYS-78; PHE-99; SER-124; SER-154; ILE-165; VAL-286; THR-301; PHE-320; GLY-406; SER-510; THR-511; LYS-513; ASP-528; PHE-541; HIS-545; HIS-549; THR-589; GLN-591; MET-593; LYS-647; LEU-726; LEU-729; GLN-788; VAL-975 AND TRP-1084</scope>
    <scope>VARIANTS ALA-175; GLN-590 AND THR-934</scope>
</reference>
<reference key="35">
    <citation type="journal article" date="2014" name="Eur. J. Hum. Genet.">
        <title>Two ABCB4 point mutations of strategic NBD-motifs do not prevent protein targeting to the plasma membrane but promote MDR3 dysfunction.</title>
        <authorList>
            <person name="Degiorgio D."/>
            <person name="Corsetto P.A."/>
            <person name="Rizzo A.M."/>
            <person name="Colombo C."/>
            <person name="Seia M."/>
            <person name="Costantino L."/>
            <person name="Montorfano G."/>
            <person name="Tomaiuolo R."/>
            <person name="Bordo D."/>
            <person name="Sansanelli S."/>
            <person name="Li M."/>
            <person name="Tavian D."/>
            <person name="Rastaldi M.P."/>
            <person name="Coviello D.A."/>
        </authorList>
    </citation>
    <scope>VARIANT PFIC3 ARG-481</scope>
    <scope>CHARACTERIZATION OF VARIANTS PFIC3 HIS-403 AND ARG-481</scope>
    <scope>FUNCTION</scope>
    <scope>SUBCELLULAR LOCATION</scope>
</reference>
<reference key="36">
    <citation type="journal article" date="2014" name="Hepatology">
        <title>Phosphorylation of ABCB4 impacts its function: insights from disease-causing mutations.</title>
        <authorList>
            <person name="Gautherot J."/>
            <person name="Delautier D."/>
            <person name="Maubert M.A."/>
            <person name="Ait-Slimane T."/>
            <person name="Bolbach G."/>
            <person name="Delaunay J.L."/>
            <person name="Durand-Schneider A.M."/>
            <person name="Firrincieli D."/>
            <person name="Barbu V."/>
            <person name="Chignard N."/>
            <person name="Housset C."/>
            <person name="Maurice M."/>
            <person name="Falguieres T."/>
        </authorList>
    </citation>
    <scope>VARIANTS GBD1 MET-34 AND GLY-47</scope>
    <scope>CHARACTERIZATION OF VARIANTS GBD1 MET-34 AND GLY-47</scope>
    <scope>FUNCTION</scope>
    <scope>SUBCELLULAR LOCATION</scope>
    <scope>PHOSPHORYLATION AT THR-34</scope>
    <scope>GLYCOSYLATION</scope>
    <scope>MUTAGENESIS OF THR-34; THR-44 AND SER-49</scope>
    <scope>IDENTIFICATION BY MASS SPECTROMETRY</scope>
</reference>
<reference key="37">
    <citation type="journal article" date="2015" name="Gut">
        <title>Functional analysis of ABCB4 mutations relates clinical outcomes of progressive familial intrahepatic cholestasis type 3 to the degree of MDR3 floppase activity.</title>
        <authorList>
            <person name="Gordo-Gilart R."/>
            <person name="Andueza S."/>
            <person name="Hierro L."/>
            <person name="Martinez-Fernandez P."/>
            <person name="D'Agostino D."/>
            <person name="Jara P."/>
            <person name="Alvarez L."/>
        </authorList>
    </citation>
    <scope>VARIANTS PFIC3 ARG-68; MET-201; HIS-459; LEU-479; PRO-978 AND LYS-1125</scope>
    <scope>CHARACTERIZATION OF VARIANTS PFIC3 ARG-68; MET-201; HIS-459; LEU-479; PRO-978 AND LYS-1125</scope>
    <scope>FUNCTION</scope>
    <scope>SUBCELLULAR LOCATION</scope>
</reference>
<reference key="38">
    <citation type="journal article" date="2017" name="Hepatology">
        <title>Functional defect of variants in the adenosine triphosphate-binding sites of ABCB4 and their rescue by the cystic fibrosis transmembrane conductance regulator potentiator, ivacaftor (VX-770).</title>
        <authorList>
            <person name="Delaunay J.L."/>
            <person name="Bruneau A."/>
            <person name="Hoffmann B."/>
            <person name="Durand-Schneider A.M."/>
            <person name="Barbu V."/>
            <person name="Jacquemin E."/>
            <person name="Maurice M."/>
            <person name="Housset C."/>
            <person name="Callebaut I."/>
            <person name="Ait-Slimane T."/>
        </authorList>
    </citation>
    <scope>CHARACTERIZATION OF VARIANTS GBD1 ARG-536; LEU-726; LEU-1183 AND SER-1185</scope>
    <scope>CHARACTERIZATION OF VARIANT PFIC3 ASP-535</scope>
    <scope>SUBCELLULAR LOCATION</scope>
    <scope>FUNCTION</scope>
</reference>
<reference key="39">
    <citation type="journal article" date="2017" name="Int. J. Biochem. Cell Biol.">
        <title>Comparison of in silico prediction and experimental assessment of ABCB4 variants identified in patients with biliary diseases.</title>
        <authorList>
            <person name="Khabou B."/>
            <person name="Durand-Schneider A.M."/>
            <person name="Delaunay J.L."/>
            <person name="Ait-Slimane T."/>
            <person name="Barbu V."/>
            <person name="Fakhfakh F."/>
            <person name="Housset C."/>
            <person name="Maurice M."/>
        </authorList>
    </citation>
    <scope>CHARACTERIZATION OF VARIANTS GBD1 ASP-528 AND SER-1168</scope>
</reference>
<gene>
    <name evidence="43" type="primary">ABCB4</name>
    <name evidence="39" type="synonym">MDR3</name>
    <name type="synonym">PGY3</name>
</gene>
<evidence type="ECO:0000250" key="1"/>
<evidence type="ECO:0000250" key="2">
    <source>
        <dbReference type="UniProtKB" id="P21440"/>
    </source>
</evidence>
<evidence type="ECO:0000250" key="3">
    <source>
        <dbReference type="UniProtKB" id="Q08201"/>
    </source>
</evidence>
<evidence type="ECO:0000255" key="4"/>
<evidence type="ECO:0000255" key="5">
    <source>
        <dbReference type="PROSITE-ProRule" id="PRU00434"/>
    </source>
</evidence>
<evidence type="ECO:0000255" key="6">
    <source>
        <dbReference type="PROSITE-ProRule" id="PRU00441"/>
    </source>
</evidence>
<evidence type="ECO:0000269" key="7">
    <source>
    </source>
</evidence>
<evidence type="ECO:0000269" key="8">
    <source>
    </source>
</evidence>
<evidence type="ECO:0000269" key="9">
    <source>
    </source>
</evidence>
<evidence type="ECO:0000269" key="10">
    <source>
    </source>
</evidence>
<evidence type="ECO:0000269" key="11">
    <source>
    </source>
</evidence>
<evidence type="ECO:0000269" key="12">
    <source>
    </source>
</evidence>
<evidence type="ECO:0000269" key="13">
    <source>
    </source>
</evidence>
<evidence type="ECO:0000269" key="14">
    <source>
    </source>
</evidence>
<evidence type="ECO:0000269" key="15">
    <source>
    </source>
</evidence>
<evidence type="ECO:0000269" key="16">
    <source>
    </source>
</evidence>
<evidence type="ECO:0000269" key="17">
    <source>
    </source>
</evidence>
<evidence type="ECO:0000269" key="18">
    <source>
    </source>
</evidence>
<evidence type="ECO:0000269" key="19">
    <source>
    </source>
</evidence>
<evidence type="ECO:0000269" key="20">
    <source>
    </source>
</evidence>
<evidence type="ECO:0000269" key="21">
    <source>
    </source>
</evidence>
<evidence type="ECO:0000269" key="22">
    <source>
    </source>
</evidence>
<evidence type="ECO:0000269" key="23">
    <source>
    </source>
</evidence>
<evidence type="ECO:0000269" key="24">
    <source>
    </source>
</evidence>
<evidence type="ECO:0000269" key="25">
    <source>
    </source>
</evidence>
<evidence type="ECO:0000269" key="26">
    <source>
    </source>
</evidence>
<evidence type="ECO:0000269" key="27">
    <source>
    </source>
</evidence>
<evidence type="ECO:0000269" key="28">
    <source>
    </source>
</evidence>
<evidence type="ECO:0000269" key="29">
    <source>
    </source>
</evidence>
<evidence type="ECO:0000269" key="30">
    <source>
    </source>
</evidence>
<evidence type="ECO:0000269" key="31">
    <source>
    </source>
</evidence>
<evidence type="ECO:0000269" key="32">
    <source>
    </source>
</evidence>
<evidence type="ECO:0000269" key="33">
    <source>
    </source>
</evidence>
<evidence type="ECO:0000269" key="34">
    <source>
    </source>
</evidence>
<evidence type="ECO:0000269" key="35">
    <source>
    </source>
</evidence>
<evidence type="ECO:0000269" key="36">
    <source>
    </source>
</evidence>
<evidence type="ECO:0000269" key="37">
    <source>
    </source>
</evidence>
<evidence type="ECO:0000269" key="38">
    <source ref="2"/>
</evidence>
<evidence type="ECO:0000303" key="39">
    <source>
    </source>
</evidence>
<evidence type="ECO:0000303" key="40">
    <source>
    </source>
</evidence>
<evidence type="ECO:0000305" key="41"/>
<evidence type="ECO:0000305" key="42">
    <source>
    </source>
</evidence>
<evidence type="ECO:0000312" key="43">
    <source>
        <dbReference type="HGNC" id="HGNC:45"/>
    </source>
</evidence>
<evidence type="ECO:0007744" key="44">
    <source>
        <dbReference type="PDB" id="6S7P"/>
    </source>
</evidence>
<evidence type="ECO:0007829" key="45">
    <source>
        <dbReference type="PDB" id="6S7P"/>
    </source>
</evidence>
<accession>P21439</accession>
<accession>A0A2V7</accession>
<accession>A4D1D3</accession>
<accession>A4D1D4</accession>
<accession>A4D1D5</accession>
<accession>D6W5P3</accession>
<accession>D6W5P4</accession>
<accession>Q14813</accession>
<proteinExistence type="evidence at protein level"/>
<dbReference type="EC" id="7.6.2.1" evidence="2"/>
<dbReference type="EMBL" id="M23234">
    <property type="protein sequence ID" value="AAA36207.1"/>
    <property type="molecule type" value="mRNA"/>
</dbReference>
<dbReference type="EMBL" id="EF034088">
    <property type="protein sequence ID" value="ABJ53424.1"/>
    <property type="molecule type" value="Genomic_DNA"/>
</dbReference>
<dbReference type="EMBL" id="AC005045">
    <property type="status" value="NOT_ANNOTATED_CDS"/>
    <property type="molecule type" value="Genomic_DNA"/>
</dbReference>
<dbReference type="EMBL" id="AC005068">
    <property type="status" value="NOT_ANNOTATED_CDS"/>
    <property type="molecule type" value="Genomic_DNA"/>
</dbReference>
<dbReference type="EMBL" id="AC006154">
    <property type="status" value="NOT_ANNOTATED_CDS"/>
    <property type="molecule type" value="Genomic_DNA"/>
</dbReference>
<dbReference type="EMBL" id="CH236949">
    <property type="protein sequence ID" value="EAL24174.1"/>
    <property type="molecule type" value="Genomic_DNA"/>
</dbReference>
<dbReference type="EMBL" id="CH236949">
    <property type="protein sequence ID" value="EAL24175.1"/>
    <property type="molecule type" value="Genomic_DNA"/>
</dbReference>
<dbReference type="EMBL" id="CH236949">
    <property type="protein sequence ID" value="EAL24176.1"/>
    <property type="molecule type" value="Genomic_DNA"/>
</dbReference>
<dbReference type="EMBL" id="CH471091">
    <property type="protein sequence ID" value="EAW76946.1"/>
    <property type="molecule type" value="Genomic_DNA"/>
</dbReference>
<dbReference type="EMBL" id="CH471091">
    <property type="protein sequence ID" value="EAW76947.1"/>
    <property type="molecule type" value="Genomic_DNA"/>
</dbReference>
<dbReference type="EMBL" id="CH471091">
    <property type="protein sequence ID" value="EAW76948.1"/>
    <property type="molecule type" value="Genomic_DNA"/>
</dbReference>
<dbReference type="EMBL" id="CH471091">
    <property type="protein sequence ID" value="EAW76950.1"/>
    <property type="molecule type" value="Genomic_DNA"/>
</dbReference>
<dbReference type="EMBL" id="CH471091">
    <property type="protein sequence ID" value="EAW76951.1"/>
    <property type="molecule type" value="Genomic_DNA"/>
</dbReference>
<dbReference type="EMBL" id="CH471091">
    <property type="protein sequence ID" value="EAW76952.1"/>
    <property type="molecule type" value="Genomic_DNA"/>
</dbReference>
<dbReference type="EMBL" id="Z35284">
    <property type="protein sequence ID" value="CAA84542.1"/>
    <property type="status" value="ALT_SEQ"/>
    <property type="molecule type" value="mRNA"/>
</dbReference>
<dbReference type="EMBL" id="X06181">
    <property type="protein sequence ID" value="CAA29547.1"/>
    <property type="molecule type" value="mRNA"/>
</dbReference>
<dbReference type="CCDS" id="CCDS5605.1">
    <molecule id="P21439-2"/>
</dbReference>
<dbReference type="CCDS" id="CCDS5606.1">
    <molecule id="P21439-1"/>
</dbReference>
<dbReference type="CCDS" id="CCDS5607.1">
    <molecule id="P21439-3"/>
</dbReference>
<dbReference type="PIR" id="JS0051">
    <property type="entry name" value="DVHU3"/>
</dbReference>
<dbReference type="RefSeq" id="NP_000434.1">
    <molecule id="P21439-2"/>
    <property type="nucleotide sequence ID" value="NM_000443.4"/>
</dbReference>
<dbReference type="RefSeq" id="NP_061337.1">
    <molecule id="P21439-1"/>
    <property type="nucleotide sequence ID" value="NM_018849.3"/>
</dbReference>
<dbReference type="RefSeq" id="NP_061338.1">
    <molecule id="P21439-3"/>
    <property type="nucleotide sequence ID" value="NM_018850.3"/>
</dbReference>
<dbReference type="RefSeq" id="XP_011514615.1">
    <property type="nucleotide sequence ID" value="XM_011516313.2"/>
</dbReference>
<dbReference type="PDB" id="6S7P">
    <property type="method" value="EM"/>
    <property type="resolution" value="3.20 A"/>
    <property type="chains" value="A=1-1286"/>
</dbReference>
<dbReference type="PDB" id="7NIU">
    <property type="method" value="EM"/>
    <property type="resolution" value="4.20 A"/>
    <property type="chains" value="A=1-1286"/>
</dbReference>
<dbReference type="PDB" id="7NIV">
    <property type="method" value="EM"/>
    <property type="resolution" value="3.60 A"/>
    <property type="chains" value="A=1-1286"/>
</dbReference>
<dbReference type="PDB" id="7NIW">
    <property type="method" value="EM"/>
    <property type="resolution" value="3.80 A"/>
    <property type="chains" value="A=1-1286"/>
</dbReference>
<dbReference type="PDBsum" id="6S7P"/>
<dbReference type="PDBsum" id="7NIU"/>
<dbReference type="PDBsum" id="7NIV"/>
<dbReference type="PDBsum" id="7NIW"/>
<dbReference type="EMDB" id="EMD-10111"/>
<dbReference type="EMDB" id="EMD-12365"/>
<dbReference type="EMDB" id="EMD-12366"/>
<dbReference type="EMDB" id="EMD-12367"/>
<dbReference type="SMR" id="P21439"/>
<dbReference type="BioGRID" id="111263">
    <property type="interactions" value="6"/>
</dbReference>
<dbReference type="FunCoup" id="P21439">
    <property type="interactions" value="226"/>
</dbReference>
<dbReference type="IntAct" id="P21439">
    <property type="interactions" value="3"/>
</dbReference>
<dbReference type="STRING" id="9606.ENSP00000265723"/>
<dbReference type="BindingDB" id="P21439"/>
<dbReference type="ChEMBL" id="CHEMBL1743129"/>
<dbReference type="DrugBank" id="DB14068">
    <property type="generic name" value="Dexniguldipine"/>
</dbReference>
<dbReference type="DrugBank" id="DB06414">
    <property type="generic name" value="Etravirine"/>
</dbReference>
<dbReference type="DrugBank" id="DB14070">
    <property type="generic name" value="HM-30181"/>
</dbReference>
<dbReference type="DrugBank" id="DB12799">
    <property type="generic name" value="Laniquidar"/>
</dbReference>
<dbReference type="DrugBank" id="DB06207">
    <property type="generic name" value="Silodosin"/>
</dbReference>
<dbReference type="DrugBank" id="DB06191">
    <property type="generic name" value="Zosuquidar"/>
</dbReference>
<dbReference type="SwissLipids" id="SLP:000000384"/>
<dbReference type="TCDB" id="3.A.1.201.3">
    <property type="family name" value="the atp-binding cassette (abc) superfamily"/>
</dbReference>
<dbReference type="GlyCosmos" id="P21439">
    <property type="glycosylation" value="2 sites, No reported glycans"/>
</dbReference>
<dbReference type="GlyGen" id="P21439">
    <property type="glycosylation" value="3 sites, 1 N-linked glycan (1 site)"/>
</dbReference>
<dbReference type="iPTMnet" id="P21439"/>
<dbReference type="PhosphoSitePlus" id="P21439"/>
<dbReference type="BioMuta" id="ABCB4"/>
<dbReference type="DMDM" id="126302568"/>
<dbReference type="jPOST" id="P21439"/>
<dbReference type="MassIVE" id="P21439"/>
<dbReference type="PaxDb" id="9606-ENSP00000265723"/>
<dbReference type="PeptideAtlas" id="P21439"/>
<dbReference type="ProteomicsDB" id="53868">
    <molecule id="P21439-1"/>
</dbReference>
<dbReference type="ProteomicsDB" id="53869">
    <molecule id="P21439-2"/>
</dbReference>
<dbReference type="ProteomicsDB" id="613"/>
<dbReference type="Antibodypedia" id="3853">
    <property type="antibodies" value="223 antibodies from 33 providers"/>
</dbReference>
<dbReference type="DNASU" id="5244"/>
<dbReference type="Ensembl" id="ENST00000265723.8">
    <molecule id="P21439-1"/>
    <property type="protein sequence ID" value="ENSP00000265723.4"/>
    <property type="gene ID" value="ENSG00000005471.19"/>
</dbReference>
<dbReference type="Ensembl" id="ENST00000359206.8">
    <molecule id="P21439-2"/>
    <property type="protein sequence ID" value="ENSP00000352135.3"/>
    <property type="gene ID" value="ENSG00000005471.19"/>
</dbReference>
<dbReference type="Ensembl" id="ENST00000453593.5">
    <molecule id="P21439-3"/>
    <property type="protein sequence ID" value="ENSP00000392983.1"/>
    <property type="gene ID" value="ENSG00000005471.19"/>
</dbReference>
<dbReference type="Ensembl" id="ENST00000649586.2">
    <molecule id="P21439-2"/>
    <property type="protein sequence ID" value="ENSP00000496956.2"/>
    <property type="gene ID" value="ENSG00000005471.19"/>
</dbReference>
<dbReference type="GeneID" id="5244"/>
<dbReference type="KEGG" id="hsa:5244"/>
<dbReference type="MANE-Select" id="ENST00000649586.2">
    <molecule id="P21439-2"/>
    <property type="protein sequence ID" value="ENSP00000496956.2"/>
    <property type="RefSeq nucleotide sequence ID" value="NM_000443.4"/>
    <property type="RefSeq protein sequence ID" value="NP_000434.1"/>
</dbReference>
<dbReference type="UCSC" id="uc003uiv.2">
    <molecule id="P21439-1"/>
    <property type="organism name" value="human"/>
</dbReference>
<dbReference type="AGR" id="HGNC:45"/>
<dbReference type="CTD" id="5244"/>
<dbReference type="DisGeNET" id="5244"/>
<dbReference type="GeneCards" id="ABCB4"/>
<dbReference type="HGNC" id="HGNC:45">
    <property type="gene designation" value="ABCB4"/>
</dbReference>
<dbReference type="HPA" id="ENSG00000005471">
    <property type="expression patterns" value="Tissue enriched (liver)"/>
</dbReference>
<dbReference type="MalaCards" id="ABCB4"/>
<dbReference type="MIM" id="171060">
    <property type="type" value="gene"/>
</dbReference>
<dbReference type="MIM" id="600803">
    <property type="type" value="phenotype"/>
</dbReference>
<dbReference type="MIM" id="602347">
    <property type="type" value="phenotype"/>
</dbReference>
<dbReference type="MIM" id="614972">
    <property type="type" value="phenotype"/>
</dbReference>
<dbReference type="neXtProt" id="NX_P21439"/>
<dbReference type="OpenTargets" id="ENSG00000005471"/>
<dbReference type="Orphanet" id="69665">
    <property type="disease" value="Intrahepatic cholestasis of pregnancy"/>
</dbReference>
<dbReference type="Orphanet" id="69663">
    <property type="disease" value="Low phospholipid-associated cholelithiasis"/>
</dbReference>
<dbReference type="Orphanet" id="79305">
    <property type="disease" value="Progressive familial intrahepatic cholestasis type 3"/>
</dbReference>
<dbReference type="PharmGKB" id="PA268"/>
<dbReference type="VEuPathDB" id="HostDB:ENSG00000005471"/>
<dbReference type="eggNOG" id="KOG0055">
    <property type="taxonomic scope" value="Eukaryota"/>
</dbReference>
<dbReference type="GeneTree" id="ENSGT00940000159418"/>
<dbReference type="HOGENOM" id="CLU_000604_17_2_1"/>
<dbReference type="InParanoid" id="P21439"/>
<dbReference type="OMA" id="YEMCLGQ"/>
<dbReference type="OrthoDB" id="6500128at2759"/>
<dbReference type="PAN-GO" id="P21439">
    <property type="GO annotations" value="7 GO annotations based on evolutionary models"/>
</dbReference>
<dbReference type="PhylomeDB" id="P21439"/>
<dbReference type="TreeFam" id="TF105193"/>
<dbReference type="PathwayCommons" id="P21439"/>
<dbReference type="Reactome" id="R-HSA-1989781">
    <property type="pathway name" value="PPARA activates gene expression"/>
</dbReference>
<dbReference type="Reactome" id="R-HSA-382556">
    <property type="pathway name" value="ABC-family proteins mediated transport"/>
</dbReference>
<dbReference type="Reactome" id="R-HSA-5678771">
    <property type="pathway name" value="Defective ABCB4 causes PFIC3, ICP3 and GBD1"/>
</dbReference>
<dbReference type="SignaLink" id="P21439"/>
<dbReference type="SIGNOR" id="P21439"/>
<dbReference type="BioGRID-ORCS" id="5244">
    <property type="hits" value="10 hits in 1156 CRISPR screens"/>
</dbReference>
<dbReference type="ChiTaRS" id="ABCB4">
    <property type="organism name" value="human"/>
</dbReference>
<dbReference type="GeneWiki" id="ABCB4"/>
<dbReference type="GenomeRNAi" id="5244"/>
<dbReference type="Pharos" id="P21439">
    <property type="development level" value="Tbio"/>
</dbReference>
<dbReference type="PRO" id="PR:P21439"/>
<dbReference type="Proteomes" id="UP000005640">
    <property type="component" value="Chromosome 7"/>
</dbReference>
<dbReference type="RNAct" id="P21439">
    <property type="molecule type" value="protein"/>
</dbReference>
<dbReference type="Bgee" id="ENSG00000005471">
    <property type="expression patterns" value="Expressed in right lobe of liver and 118 other cell types or tissues"/>
</dbReference>
<dbReference type="ExpressionAtlas" id="P21439">
    <property type="expression patterns" value="baseline and differential"/>
</dbReference>
<dbReference type="GO" id="GO:0016324">
    <property type="term" value="C:apical plasma membrane"/>
    <property type="evidence" value="ECO:0000314"/>
    <property type="project" value="UniProtKB"/>
</dbReference>
<dbReference type="GO" id="GO:0030136">
    <property type="term" value="C:clathrin-coated vesicle"/>
    <property type="evidence" value="ECO:0007669"/>
    <property type="project" value="UniProtKB-SubCell"/>
</dbReference>
<dbReference type="GO" id="GO:0005737">
    <property type="term" value="C:cytoplasm"/>
    <property type="evidence" value="ECO:0000314"/>
    <property type="project" value="UniProtKB"/>
</dbReference>
<dbReference type="GO" id="GO:0005829">
    <property type="term" value="C:cytosol"/>
    <property type="evidence" value="ECO:0000314"/>
    <property type="project" value="HPA"/>
</dbReference>
<dbReference type="GO" id="GO:0070062">
    <property type="term" value="C:extracellular exosome"/>
    <property type="evidence" value="ECO:0007005"/>
    <property type="project" value="UniProtKB"/>
</dbReference>
<dbReference type="GO" id="GO:0005925">
    <property type="term" value="C:focal adhesion"/>
    <property type="evidence" value="ECO:0000314"/>
    <property type="project" value="HPA"/>
</dbReference>
<dbReference type="GO" id="GO:0046581">
    <property type="term" value="C:intercellular canaliculus"/>
    <property type="evidence" value="ECO:0007669"/>
    <property type="project" value="Ensembl"/>
</dbReference>
<dbReference type="GO" id="GO:0016020">
    <property type="term" value="C:membrane"/>
    <property type="evidence" value="ECO:0000304"/>
    <property type="project" value="ProtInc"/>
</dbReference>
<dbReference type="GO" id="GO:0045121">
    <property type="term" value="C:membrane raft"/>
    <property type="evidence" value="ECO:0007669"/>
    <property type="project" value="UniProtKB-SubCell"/>
</dbReference>
<dbReference type="GO" id="GO:0005654">
    <property type="term" value="C:nucleoplasm"/>
    <property type="evidence" value="ECO:0000314"/>
    <property type="project" value="HPA"/>
</dbReference>
<dbReference type="GO" id="GO:0005886">
    <property type="term" value="C:plasma membrane"/>
    <property type="evidence" value="ECO:0000314"/>
    <property type="project" value="HPA"/>
</dbReference>
<dbReference type="GO" id="GO:0140359">
    <property type="term" value="F:ABC-type transporter activity"/>
    <property type="evidence" value="ECO:0007669"/>
    <property type="project" value="InterPro"/>
</dbReference>
<dbReference type="GO" id="GO:0005524">
    <property type="term" value="F:ATP binding"/>
    <property type="evidence" value="ECO:0007669"/>
    <property type="project" value="UniProtKB-KW"/>
</dbReference>
<dbReference type="GO" id="GO:0016887">
    <property type="term" value="F:ATP hydrolysis activity"/>
    <property type="evidence" value="ECO:0007669"/>
    <property type="project" value="InterPro"/>
</dbReference>
<dbReference type="GO" id="GO:0042626">
    <property type="term" value="F:ATPase-coupled transmembrane transporter activity"/>
    <property type="evidence" value="ECO:0000314"/>
    <property type="project" value="UniProtKB"/>
</dbReference>
<dbReference type="GO" id="GO:0090554">
    <property type="term" value="F:phosphatidylcholine floppase activity"/>
    <property type="evidence" value="ECO:0000314"/>
    <property type="project" value="UniProtKB"/>
</dbReference>
<dbReference type="GO" id="GO:0005548">
    <property type="term" value="F:phospholipid transporter activity"/>
    <property type="evidence" value="ECO:0000304"/>
    <property type="project" value="Reactome"/>
</dbReference>
<dbReference type="GO" id="GO:0032782">
    <property type="term" value="P:bile acid secretion"/>
    <property type="evidence" value="ECO:0000250"/>
    <property type="project" value="UniProtKB"/>
</dbReference>
<dbReference type="GO" id="GO:1903413">
    <property type="term" value="P:cellular response to bile acid"/>
    <property type="evidence" value="ECO:0000314"/>
    <property type="project" value="UniProtKB"/>
</dbReference>
<dbReference type="GO" id="GO:0055088">
    <property type="term" value="P:lipid homeostasis"/>
    <property type="evidence" value="ECO:0000314"/>
    <property type="project" value="UniProtKB"/>
</dbReference>
<dbReference type="GO" id="GO:0006629">
    <property type="term" value="P:lipid metabolic process"/>
    <property type="evidence" value="ECO:0000304"/>
    <property type="project" value="ProtInc"/>
</dbReference>
<dbReference type="GO" id="GO:0045332">
    <property type="term" value="P:phospholipid translocation"/>
    <property type="evidence" value="ECO:0000314"/>
    <property type="project" value="BHF-UCL"/>
</dbReference>
<dbReference type="GO" id="GO:0032376">
    <property type="term" value="P:positive regulation of cholesterol transport"/>
    <property type="evidence" value="ECO:0000314"/>
    <property type="project" value="UniProtKB"/>
</dbReference>
<dbReference type="GO" id="GO:0061092">
    <property type="term" value="P:positive regulation of phospholipid translocation"/>
    <property type="evidence" value="ECO:0000314"/>
    <property type="project" value="UniProtKB"/>
</dbReference>
<dbReference type="GO" id="GO:2001140">
    <property type="term" value="P:positive regulation of phospholipid transport"/>
    <property type="evidence" value="ECO:0000314"/>
    <property type="project" value="UniProtKB"/>
</dbReference>
<dbReference type="GO" id="GO:1901557">
    <property type="term" value="P:response to fenofibrate"/>
    <property type="evidence" value="ECO:0000250"/>
    <property type="project" value="UniProtKB"/>
</dbReference>
<dbReference type="GO" id="GO:0055085">
    <property type="term" value="P:transmembrane transport"/>
    <property type="evidence" value="ECO:0000304"/>
    <property type="project" value="Reactome"/>
</dbReference>
<dbReference type="CDD" id="cd18578">
    <property type="entry name" value="ABC_6TM_Pgp_ABCB1_D2_like"/>
    <property type="match status" value="1"/>
</dbReference>
<dbReference type="CDD" id="cd03249">
    <property type="entry name" value="ABC_MTABC3_MDL1_MDL2"/>
    <property type="match status" value="2"/>
</dbReference>
<dbReference type="FunFam" id="1.20.1560.10:FF:000018">
    <property type="entry name" value="ATP-binding cassette subfamily B member 11"/>
    <property type="match status" value="1"/>
</dbReference>
<dbReference type="FunFam" id="1.20.1560.10:FF:000043">
    <property type="entry name" value="Multidrug resistance protein 1A"/>
    <property type="match status" value="1"/>
</dbReference>
<dbReference type="FunFam" id="3.40.50.300:FF:000479">
    <property type="entry name" value="Multidrug resistance protein 1A"/>
    <property type="match status" value="2"/>
</dbReference>
<dbReference type="FunFam" id="1.20.1560.10:FF:000083">
    <property type="entry name" value="phosphatidylcholine translocator ABCB4 isoform X7"/>
    <property type="match status" value="1"/>
</dbReference>
<dbReference type="Gene3D" id="1.20.1560.10">
    <property type="entry name" value="ABC transporter type 1, transmembrane domain"/>
    <property type="match status" value="1"/>
</dbReference>
<dbReference type="Gene3D" id="3.40.50.300">
    <property type="entry name" value="P-loop containing nucleotide triphosphate hydrolases"/>
    <property type="match status" value="2"/>
</dbReference>
<dbReference type="InterPro" id="IPR003593">
    <property type="entry name" value="AAA+_ATPase"/>
</dbReference>
<dbReference type="InterPro" id="IPR011527">
    <property type="entry name" value="ABC1_TM_dom"/>
</dbReference>
<dbReference type="InterPro" id="IPR036640">
    <property type="entry name" value="ABC1_TM_sf"/>
</dbReference>
<dbReference type="InterPro" id="IPR003439">
    <property type="entry name" value="ABC_transporter-like_ATP-bd"/>
</dbReference>
<dbReference type="InterPro" id="IPR017871">
    <property type="entry name" value="ABC_transporter-like_CS"/>
</dbReference>
<dbReference type="InterPro" id="IPR027417">
    <property type="entry name" value="P-loop_NTPase"/>
</dbReference>
<dbReference type="InterPro" id="IPR039421">
    <property type="entry name" value="Type_1_exporter"/>
</dbReference>
<dbReference type="PANTHER" id="PTHR43394:SF28">
    <property type="entry name" value="ATP-BINDING CASSETTE SUBFAMILY B MEMBER 1"/>
    <property type="match status" value="1"/>
</dbReference>
<dbReference type="PANTHER" id="PTHR43394">
    <property type="entry name" value="ATP-DEPENDENT PERMEASE MDL1, MITOCHONDRIAL"/>
    <property type="match status" value="1"/>
</dbReference>
<dbReference type="Pfam" id="PF00664">
    <property type="entry name" value="ABC_membrane"/>
    <property type="match status" value="2"/>
</dbReference>
<dbReference type="Pfam" id="PF00005">
    <property type="entry name" value="ABC_tran"/>
    <property type="match status" value="2"/>
</dbReference>
<dbReference type="SMART" id="SM00382">
    <property type="entry name" value="AAA"/>
    <property type="match status" value="2"/>
</dbReference>
<dbReference type="SUPFAM" id="SSF90123">
    <property type="entry name" value="ABC transporter transmembrane region"/>
    <property type="match status" value="2"/>
</dbReference>
<dbReference type="SUPFAM" id="SSF52540">
    <property type="entry name" value="P-loop containing nucleoside triphosphate hydrolases"/>
    <property type="match status" value="2"/>
</dbReference>
<dbReference type="PROSITE" id="PS50929">
    <property type="entry name" value="ABC_TM1F"/>
    <property type="match status" value="2"/>
</dbReference>
<dbReference type="PROSITE" id="PS00211">
    <property type="entry name" value="ABC_TRANSPORTER_1"/>
    <property type="match status" value="2"/>
</dbReference>
<dbReference type="PROSITE" id="PS50893">
    <property type="entry name" value="ABC_TRANSPORTER_2"/>
    <property type="match status" value="2"/>
</dbReference>
<sequence length="1286" mass="141523">MDLEAAKNGTAWRPTSAEGDFELGISSKQKRKKTKTVKMIGVLTLFRYSDWQDKLFMSLGTIMAIAHGSGLPLMMIVFGEMTDKFVDTAGNFSFPVNFSLSLLNPGKILEEEMTRYAYYYSGLGAGVLVAAYIQVSFWTLAAGRQIRKIRQKFFHAILRQEIGWFDINDTTELNTRLTDDISKISEGIGDKVGMFFQAVATFFAGFIVGFIRGWKLTLVIMAISPILGLSAAVWAKILSAFSDKELAAYAKAGAVAEEALGAIRTVIAFGGQNKELERYQKHLENAKEIGIKKAISANISMGIAFLLIYASYALAFWYGSTLVISKEYTIGNAMTVFFSILIGAFSVGQAAPCIDAFANARGAAYVIFDIIDNNPKIDSFSERGHKPDSIKGNLEFNDVHFSYPSRANVKILKGLNLKVQSGQTVALVGSSGCGKSTTVQLIQRLYDPDEGTINIDGQDIRNFNVNYLREIIGVVSQEPVLFSTTIAENICYGRGNVTMDEIKKAVKEANAYEFIMKLPQKFDTLVGERGAQLSGGQKQRIAIARALVRNPKILLLDEATSALDTESEAEVQAALDKAREGRTTIVIAHRLSTVRNADVIAGFEDGVIVEQGSHSELMKKEGVYFKLVNMQTSGSQIQSEEFELNDEKAATRMAPNGWKSRLFRHSTQKNLKNSQMCQKSLDVETDGLEANVPPVSFLKVLKLNKTEWPYFVVGTVCAIANGGLQPAFSVIFSEIIAIFGPGDDAVKQQKCNIFSLIFLFLGIISFFTFFLQGFTFGKAGEILTRRLRSMAFKAMLRQDMSWFDDHKNSTGALSTRLATDAAQVQGATGTRLALIAQNIANLGTGIIISFIYGWQLTLLLLAVVPIIAVSGIVEMKLLAGNAKRDKKELEAAGKIATEAIENIRTVVSLTQERKFESMYVEKLYGPYRNSVQKAHIYGITFSISQAFMYFSYAGCFRFGAYLIVNGHMRFRDVILVFSAIVFGAVALGHASSFAPDYAKAKLSAAHLFMLFERQPLIDSYSEEGLKPDKFEGNITFNEVVFNYPTRANVPVLQGLSLEVKKGQTLALVGSSGCGKSTVVQLLERFYDPLAGTVFVDFGFQLLDGQEAKKLNVQWLRAQLGIVSQEPILFDCSIAENIAYGDNSRVVSQDEIVSAAKAANIHPFIETLPHKYETRVGDKGTQLSGGQKQRIAIARALIRQPQILLLDEATSALDTESEKVVQEALDKAREGRTCIVIAHRLSTIQNADLIVVFQNGRVKEHGTHQQLLAQKGIYFSMVSVQAGTQNL</sequence>
<comment type="function">
    <molecule>Isoform 1</molecule>
    <text evidence="2 17 22 24 26 28 29 30 31 33 34 35 36">Energy-dependent phospholipid efflux translocator that acts as a positive regulator of biliary lipid secretion. Functions as a floppase that translocates specifically phosphatidylcholine (PC) from the inner to the outer leaflet of the canalicular membrane bilayer into the canaliculi of hepatocytes. Translocation of PC makes the biliary phospholipids available for extraction into the canaliculi lumen by bile salt mixed micelles and therefore protects the biliary tree from the detergent activity of bile salts (PubMed:17523162, PubMed:21820390, PubMed:23468132, PubMed:24594635, PubMed:24723470, PubMed:24806754, PubMed:31873305, PubMed:7957936, PubMed:8898203, PubMed:9366571). Plays a role in the recruitment of phosphatidylcholine (PC), phosphatidylethanolamine (PE) and sphingomyelin (SM) molecules to nonraft membranes and to further enrichment of SM and cholesterol in raft membranes in hepatocytes (PubMed:23468132). Required for proper phospholipid bile formation (By similarity). Indirectly involved in cholesterol efflux activity from hepatocytes into the canalicular lumen in the presence of bile salts in an ATP-dependent manner (PubMed:24045840). Promotes biliary phospholipid secretion as canaliculi-containing vesicles from the canalicular plasma membrane (PubMed:28012258, PubMed:9366571). In cooperation with ATP8B1, functions to protect hepatocytes from the deleterious detergent activity of bile salts (PubMed:21820390). Does not confer multidrug resistance (By similarity).</text>
</comment>
<comment type="catalytic activity">
    <reaction evidence="2">
        <text>ATP + H2O + phospholipidSide 1 = ADP + phosphate + phospholipidSide 2.</text>
        <dbReference type="EC" id="7.6.2.1"/>
    </reaction>
</comment>
<comment type="catalytic activity">
    <molecule>Isoform 2</molecule>
    <reaction evidence="33">
        <text>a 1,2-diacyl-sn-glycero-3-phosphocholine(in) + ATP + H2O = a 1,2-diacyl-sn-glycero-3-phosphocholine(out) + ADP + phosphate + H(+)</text>
        <dbReference type="Rhea" id="RHEA:66272"/>
        <dbReference type="ChEBI" id="CHEBI:15377"/>
        <dbReference type="ChEBI" id="CHEBI:15378"/>
        <dbReference type="ChEBI" id="CHEBI:30616"/>
        <dbReference type="ChEBI" id="CHEBI:43474"/>
        <dbReference type="ChEBI" id="CHEBI:57643"/>
        <dbReference type="ChEBI" id="CHEBI:456216"/>
    </reaction>
    <physiologicalReaction direction="left-to-right" evidence="33">
        <dbReference type="Rhea" id="RHEA:66273"/>
    </physiologicalReaction>
</comment>
<comment type="catalytic activity">
    <molecule>Isoform 1</molecule>
    <reaction evidence="2">
        <text>a 1,2-diacyl-sn-glycero-3-phosphocholine(in) + ATP + H2O = a 1,2-diacyl-sn-glycero-3-phosphocholine(out) + ADP + phosphate + H(+)</text>
        <dbReference type="Rhea" id="RHEA:66272"/>
        <dbReference type="ChEBI" id="CHEBI:15377"/>
        <dbReference type="ChEBI" id="CHEBI:15378"/>
        <dbReference type="ChEBI" id="CHEBI:30616"/>
        <dbReference type="ChEBI" id="CHEBI:43474"/>
        <dbReference type="ChEBI" id="CHEBI:57643"/>
        <dbReference type="ChEBI" id="CHEBI:456216"/>
    </reaction>
    <physiologicalReaction direction="left-to-right" evidence="2">
        <dbReference type="Rhea" id="RHEA:66273"/>
    </physiologicalReaction>
</comment>
<comment type="catalytic activity">
    <reaction evidence="35">
        <text>a 1,2-diacyl-sn-glycero-3-phosphoethanolamine(in) + ATP + H2O = a 1,2-diacyl-sn-glycero-3-phosphoethanolamine(out) + ADP + phosphate + H(+)</text>
        <dbReference type="Rhea" id="RHEA:36439"/>
        <dbReference type="ChEBI" id="CHEBI:15377"/>
        <dbReference type="ChEBI" id="CHEBI:15378"/>
        <dbReference type="ChEBI" id="CHEBI:30616"/>
        <dbReference type="ChEBI" id="CHEBI:43474"/>
        <dbReference type="ChEBI" id="CHEBI:64612"/>
        <dbReference type="ChEBI" id="CHEBI:456216"/>
    </reaction>
    <physiologicalReaction direction="left-to-right" evidence="42">
        <dbReference type="Rhea" id="RHEA:36440"/>
    </physiologicalReaction>
</comment>
<comment type="catalytic activity">
    <reaction evidence="35">
        <text>a sphingomyelin(in) + ATP + H2O = a sphingomyelin(out) + ADP + phosphate + H(+)</text>
        <dbReference type="Rhea" id="RHEA:38903"/>
        <dbReference type="ChEBI" id="CHEBI:15377"/>
        <dbReference type="ChEBI" id="CHEBI:15378"/>
        <dbReference type="ChEBI" id="CHEBI:17636"/>
        <dbReference type="ChEBI" id="CHEBI:30616"/>
        <dbReference type="ChEBI" id="CHEBI:43474"/>
        <dbReference type="ChEBI" id="CHEBI:456216"/>
    </reaction>
    <physiologicalReaction direction="left-to-right" evidence="42">
        <dbReference type="Rhea" id="RHEA:38904"/>
    </physiologicalReaction>
</comment>
<comment type="activity regulation">
    <text evidence="17 24">Translocation activity is inhibited by the ATPase inhibitor vanadate and the calcium channel blocker verapamil (PubMed:17523162, PubMed:23468132). Translocation activity is enhanced by the addition of the bile salt taurocholate (PubMed:17523162, PubMed:23468132).</text>
</comment>
<comment type="biophysicochemical properties">
    <kinetics>
        <KM evidence="33">0.6 mM for ATP</KM>
        <Vmax evidence="33">80.0 nmol/min/mg enzyme toward ATP</Vmax>
    </kinetics>
</comment>
<comment type="subunit">
    <text evidence="3 20">May interact with RACK1 (PubMed:19674157). Interacts with HAX1 (By similarity).</text>
</comment>
<comment type="subcellular location">
    <subcellularLocation>
        <location evidence="24 26 30 31">Cell membrane</location>
        <topology evidence="6">Multi-pass membrane protein</topology>
    </subcellularLocation>
    <subcellularLocation>
        <location evidence="14 20 22 27 28 29 35">Apical cell membrane</location>
        <topology evidence="6">Multi-pass membrane protein</topology>
    </subcellularLocation>
    <subcellularLocation>
        <location evidence="24">Membrane raft</location>
    </subcellularLocation>
    <subcellularLocation>
        <location evidence="26">Cytoplasm</location>
    </subcellularLocation>
    <subcellularLocation>
        <location evidence="3">Cytoplasmic vesicle</location>
        <location evidence="3">Clathrin-coated vesicle</location>
    </subcellularLocation>
    <text evidence="2 14 20 24">Localized at the apical canalicular membrane of the epithelial cells lining the lumen of the bile canaliculi and biliary ductules (By similarity). Transported from the Golgi to the apical bile canalicular membrane in a RACK1-dependent manner (PubMed:19674157). Redistributed into pseudocanaliculi formed between cells in a bezafibrate- or PPARA-dependent manner (PubMed:15258199). Localized preferentially in lipid nonraft domains of canalicular plasma membranes (PubMed:23468132).</text>
</comment>
<comment type="alternative products">
    <event type="alternative splicing"/>
    <isoform>
        <id>P21439-1</id>
        <name>1</name>
        <sequence type="displayed"/>
    </isoform>
    <isoform>
        <id>P21439-2</id>
        <name>2</name>
        <sequence type="described" ref="VSP_023263"/>
    </isoform>
    <isoform>
        <id>P21439-3</id>
        <name>3</name>
        <sequence type="described" ref="VSP_046258 VSP_023263"/>
    </isoform>
</comment>
<comment type="induction">
    <text evidence="14 27">Up-regulated by PPARA (PubMed:24122873). Up-regulated by compounds that cause peroxisome proliferation, such as fenofibrate (at protein level). Up-regulated by bezafibrate (PubMed:15258199). Up-regulated by compounds that cause peroxisome proliferation, such as fenofibrate, bezafibrate and gemfibrozil (PubMed:24122873).</text>
</comment>
<comment type="PTM">
    <text evidence="29">Phosphorylated (PubMed:24723470). Phosphorylation on Thr-34 is required for PC efflux activity. Phosphorylation occurs on serine and threonine residues in a protein kinase A- or C-dependent manner (PubMed:24723470). May be phosphorylated on Thr-44 and Ser-49 (PubMed:24723470).</text>
</comment>
<comment type="PTM">
    <text evidence="17 22 29">Glycosylated (PubMed:17523162, PubMed:21820390, PubMed:24723470).</text>
</comment>
<comment type="disease" evidence="8 10 18 21 26 28 30 31 37">
    <disease id="DI-00951">
        <name>Cholestasis, progressive familial intrahepatic, 3</name>
        <acronym>PFIC3</acronym>
        <description>A disorder characterized by early onset of cholestasis that progresses to hepatic fibrosis, cirrhosis, and end-stage liver disease before adulthood. PFIC3 inheritance is autosomal recessive.</description>
        <dbReference type="MIM" id="602347"/>
    </disease>
    <text>The disease is caused by variants affecting the gene represented in this entry.</text>
</comment>
<comment type="disease" evidence="7 11 13">
    <disease id="DI-03634">
        <name>Cholestasis of pregnancy, intrahepatic 3</name>
        <acronym>ICP3</acronym>
        <description>A liver disorder of pregnancy. It presents during the second or, more commonly, the third trimester of pregnancy with intense pruritus which becomes more severe with advancing gestation and cholestasis. It causes fetal distress, spontaneous premature delivery and intrauterine death. Patients have spontaneous and progressive disappearance of cholestasis after delivery. Cholestasis results from abnormal biliary transport from the liver into the small intestine.</description>
        <dbReference type="MIM" id="614972"/>
    </disease>
    <text>The disease is caused by variants affecting the gene represented in this entry.</text>
</comment>
<comment type="disease" evidence="9 12 23 25 29 31 32 38">
    <disease id="DI-01341">
        <name>Gallbladder disease 1</name>
        <acronym>GBD1</acronym>
        <description>One of the major digestive diseases. Gallstones composed of cholesterol (cholelithiasis) are the common manifestations in western countries. Most people with gallstones, however, remain asymptomatic through their lifetimes.</description>
        <dbReference type="MIM" id="600803"/>
    </disease>
    <text>The disease is caused by variants affecting the gene represented in this entry.</text>
</comment>
<comment type="similarity">
    <text evidence="41">Belongs to the ABC transporter superfamily. ABCB family. Multidrug resistance exporter (TC 3.A.1.201) subfamily.</text>
</comment>
<comment type="sequence caution" evidence="41">
    <conflict type="miscellaneous discrepancy">
        <sequence resource="EMBL-CDS" id="CAA84542"/>
    </conflict>
    <text>Probable cloning artifact.</text>
</comment>
<comment type="online information" name="ABCMdb">
    <link uri="http://abcm2.hegelab.org/search"/>
    <text>Database for mutations in ABC proteins</text>
</comment>
<keyword id="KW-0002">3D-structure</keyword>
<keyword id="KW-0025">Alternative splicing</keyword>
<keyword id="KW-0067">ATP-binding</keyword>
<keyword id="KW-1003">Cell membrane</keyword>
<keyword id="KW-0963">Cytoplasm</keyword>
<keyword id="KW-0968">Cytoplasmic vesicle</keyword>
<keyword id="KW-0225">Disease variant</keyword>
<keyword id="KW-0325">Glycoprotein</keyword>
<keyword id="KW-0988">Intrahepatic cholestasis</keyword>
<keyword id="KW-0445">Lipid transport</keyword>
<keyword id="KW-0472">Membrane</keyword>
<keyword id="KW-0547">Nucleotide-binding</keyword>
<keyword id="KW-0597">Phosphoprotein</keyword>
<keyword id="KW-1267">Proteomics identification</keyword>
<keyword id="KW-1185">Reference proteome</keyword>
<keyword id="KW-0677">Repeat</keyword>
<keyword id="KW-1278">Translocase</keyword>
<keyword id="KW-0812">Transmembrane</keyword>
<keyword id="KW-1133">Transmembrane helix</keyword>
<keyword id="KW-0813">Transport</keyword>
<feature type="chain" id="PRO_0000093333" description="Phosphatidylcholine translocator ABCB4">
    <location>
        <begin position="1"/>
        <end position="1286"/>
    </location>
</feature>
<feature type="topological domain" description="Cytoplasmic" evidence="1">
    <location>
        <begin position="1"/>
        <end position="50"/>
    </location>
</feature>
<feature type="transmembrane region" description="Helical" evidence="6">
    <location>
        <begin position="51"/>
        <end position="73"/>
    </location>
</feature>
<feature type="topological domain" description="Extracellular" evidence="1">
    <location>
        <begin position="74"/>
        <end position="118"/>
    </location>
</feature>
<feature type="transmembrane region" description="Helical" evidence="6">
    <location>
        <begin position="119"/>
        <end position="139"/>
    </location>
</feature>
<feature type="topological domain" description="Cytoplasmic" evidence="1">
    <location>
        <begin position="140"/>
        <end position="188"/>
    </location>
</feature>
<feature type="transmembrane region" description="Helical" evidence="6">
    <location>
        <begin position="189"/>
        <end position="210"/>
    </location>
</feature>
<feature type="topological domain" description="Extracellular" evidence="1">
    <location>
        <begin position="211"/>
        <end position="217"/>
    </location>
</feature>
<feature type="transmembrane region" description="Helical" evidence="6">
    <location>
        <begin position="218"/>
        <end position="238"/>
    </location>
</feature>
<feature type="topological domain" description="Cytoplasmic" evidence="1">
    <location>
        <begin position="239"/>
        <end position="296"/>
    </location>
</feature>
<feature type="transmembrane region" description="Helical" evidence="6">
    <location>
        <begin position="297"/>
        <end position="318"/>
    </location>
</feature>
<feature type="topological domain" description="Extracellular" evidence="1">
    <location>
        <begin position="319"/>
        <end position="332"/>
    </location>
</feature>
<feature type="transmembrane region" description="Helical" evidence="6">
    <location>
        <begin position="333"/>
        <end position="354"/>
    </location>
</feature>
<feature type="topological domain" description="Cytoplasmic" evidence="1">
    <location>
        <begin position="355"/>
        <end position="711"/>
    </location>
</feature>
<feature type="transmembrane region" description="Helical" evidence="6">
    <location>
        <begin position="712"/>
        <end position="732"/>
    </location>
</feature>
<feature type="topological domain" description="Extracellular" evidence="1">
    <location>
        <begin position="733"/>
        <end position="755"/>
    </location>
</feature>
<feature type="transmembrane region" description="Helical" evidence="6">
    <location>
        <begin position="756"/>
        <end position="776"/>
    </location>
</feature>
<feature type="topological domain" description="Cytoplasmic" evidence="1">
    <location>
        <begin position="777"/>
        <end position="831"/>
    </location>
</feature>
<feature type="transmembrane region" description="Helical" evidence="6">
    <location>
        <begin position="832"/>
        <end position="852"/>
    </location>
</feature>
<feature type="topological domain" description="Extracellular" evidence="1">
    <location>
        <position position="853"/>
    </location>
</feature>
<feature type="transmembrane region" description="Helical" evidence="6">
    <location>
        <begin position="854"/>
        <end position="873"/>
    </location>
</feature>
<feature type="topological domain" description="Cytoplasmic" evidence="1">
    <location>
        <begin position="874"/>
        <end position="933"/>
    </location>
</feature>
<feature type="transmembrane region" description="Helical" evidence="6">
    <location>
        <begin position="934"/>
        <end position="956"/>
    </location>
</feature>
<feature type="topological domain" description="Extracellular" evidence="1">
    <location>
        <begin position="957"/>
        <end position="972"/>
    </location>
</feature>
<feature type="transmembrane region" description="Helical" evidence="6">
    <location>
        <begin position="973"/>
        <end position="994"/>
    </location>
</feature>
<feature type="topological domain" description="Cytoplasmic" evidence="1">
    <location>
        <begin position="995"/>
        <end position="1286"/>
    </location>
</feature>
<feature type="domain" description="ABC transmembrane type-1 1" evidence="6">
    <location>
        <begin position="57"/>
        <end position="359"/>
    </location>
</feature>
<feature type="domain" description="ABC transporter 1" evidence="5">
    <location>
        <begin position="394"/>
        <end position="630"/>
    </location>
</feature>
<feature type="domain" description="ABC transmembrane type-1 2" evidence="6">
    <location>
        <begin position="711"/>
        <end position="999"/>
    </location>
</feature>
<feature type="domain" description="ABC transporter 2" evidence="5">
    <location>
        <begin position="1034"/>
        <end position="1279"/>
    </location>
</feature>
<feature type="region of interest" description="Interaction with HAX1" evidence="1">
    <location>
        <begin position="625"/>
        <end position="647"/>
    </location>
</feature>
<feature type="binding site" evidence="33 44">
    <location>
        <position position="406"/>
    </location>
    <ligand>
        <name>ATP</name>
        <dbReference type="ChEBI" id="CHEBI:30616"/>
        <label>1</label>
    </ligand>
</feature>
<feature type="binding site" evidence="5 33 44">
    <location>
        <begin position="432"/>
        <end position="437"/>
    </location>
    <ligand>
        <name>ATP</name>
        <dbReference type="ChEBI" id="CHEBI:30616"/>
        <label>1</label>
    </ligand>
</feature>
<feature type="binding site" evidence="33 44">
    <location>
        <position position="477"/>
    </location>
    <ligand>
        <name>ATP</name>
        <dbReference type="ChEBI" id="CHEBI:30616"/>
        <label>1</label>
    </ligand>
</feature>
<feature type="binding site" evidence="33 44">
    <location>
        <position position="536"/>
    </location>
    <ligand>
        <name>ATP</name>
        <dbReference type="ChEBI" id="CHEBI:30616"/>
        <label>2</label>
    </ligand>
</feature>
<feature type="binding site" evidence="33 44">
    <location>
        <position position="1046"/>
    </location>
    <ligand>
        <name>ATP</name>
        <dbReference type="ChEBI" id="CHEBI:30616"/>
        <label>2</label>
    </ligand>
</feature>
<feature type="binding site" evidence="5 33 44">
    <location>
        <begin position="1071"/>
        <end position="1077"/>
    </location>
    <ligand>
        <name>ATP</name>
        <dbReference type="ChEBI" id="CHEBI:30616"/>
        <label>2</label>
    </ligand>
</feature>
<feature type="binding site" evidence="33 44">
    <location>
        <position position="1124"/>
    </location>
    <ligand>
        <name>ATP</name>
        <dbReference type="ChEBI" id="CHEBI:30616"/>
        <label>2</label>
    </ligand>
</feature>
<feature type="binding site" evidence="5 33 44">
    <location>
        <begin position="1184"/>
        <end position="1186"/>
    </location>
    <ligand>
        <name>ATP</name>
        <dbReference type="ChEBI" id="CHEBI:30616"/>
        <label>1</label>
    </ligand>
</feature>
<feature type="modified residue" description="Phosphoserine" evidence="2">
    <location>
        <position position="27"/>
    </location>
</feature>
<feature type="modified residue" description="Phosphothreonine" evidence="29">
    <location>
        <position position="34"/>
    </location>
</feature>
<feature type="glycosylation site" description="N-linked (GlcNAc...) asparagine" evidence="4">
    <location>
        <position position="91"/>
    </location>
</feature>
<feature type="glycosylation site" description="N-linked (GlcNAc...) asparagine" evidence="4">
    <location>
        <position position="97"/>
    </location>
</feature>
<feature type="splice variant" id="VSP_046258" description="In isoform 3." evidence="41">
    <location>
        <begin position="929"/>
        <end position="975"/>
    </location>
</feature>
<feature type="splice variant" id="VSP_023263" description="In isoform 2 and isoform 3." evidence="40">
    <location>
        <begin position="1094"/>
        <end position="1100"/>
    </location>
</feature>
<feature type="sequence variant" id="VAR_073728" description="In GBD1; reduces efflux activity for PC in a phosphorylation-dependent manner; dbSNP:rs142794414." evidence="23 29">
    <original>T</original>
    <variation>M</variation>
    <location>
        <position position="34"/>
    </location>
</feature>
<feature type="sequence variant" id="VAR_073729" description="In GBD1; partly retained intracellularly; reduces efflux activity for PC in a phosphorylation-dependent manner." evidence="23 25 29">
    <original>R</original>
    <variation>G</variation>
    <location>
        <position position="47"/>
    </location>
</feature>
<feature type="sequence variant" id="VAR_073730" description="Found in patients with cholangitis; uncertain significance; dbSNP:rs372685632." evidence="23">
    <original>R</original>
    <variation>Q</variation>
    <location>
        <position position="47"/>
    </location>
</feature>
<feature type="sequence variant" id="VAR_073731" description="In PFIC3; retained in the reticulum endoplasmic; greatly reduced expression; dbSNP:rs1343667900." evidence="28">
    <original>G</original>
    <variation>R</variation>
    <location>
        <position position="68"/>
    </location>
</feature>
<feature type="sequence variant" id="VAR_073732" description="In PFIC3." evidence="21">
    <original>G</original>
    <variation>R</variation>
    <location>
        <position position="70"/>
    </location>
</feature>
<feature type="sequence variant" id="VAR_073733" description="In GBD1; dbSNP:rs780641693." evidence="25">
    <original>L</original>
    <variation>H</variation>
    <location>
        <position position="71"/>
    </location>
</feature>
<feature type="sequence variant" id="VAR_073734" description="In PFIC3 and GBD1; dbSNP:rs8187788." evidence="21 25">
    <original>L</original>
    <variation>V</variation>
    <location>
        <position position="73"/>
    </location>
</feature>
<feature type="sequence variant" id="VAR_073735" description="In GBD1; dbSNP:rs1411970557." evidence="25">
    <original>F</original>
    <variation>C</variation>
    <location>
        <position position="78"/>
    </location>
</feature>
<feature type="sequence variant" id="VAR_043078" evidence="15">
    <original>D</original>
    <variation>E</variation>
    <location>
        <position position="87"/>
    </location>
</feature>
<feature type="sequence variant" id="VAR_043079" description="In dbSNP:rs377268767." evidence="15">
    <original>P</original>
    <variation>S</variation>
    <location>
        <position position="95"/>
    </location>
</feature>
<feature type="sequence variant" id="VAR_073736" description="In GBD1; dbSNP:rs1408217402." evidence="25">
    <original>S</original>
    <variation>F</variation>
    <location>
        <position position="99"/>
    </location>
</feature>
<feature type="sequence variant" id="VAR_073737" description="In GBD1." evidence="25">
    <original>G</original>
    <variation>S</variation>
    <location>
        <position position="124"/>
    </location>
</feature>
<feature type="sequence variant" id="VAR_073738" description="In PFIC3; dbSNP:rs1021988376." evidence="18">
    <original>G</original>
    <variation>E</variation>
    <location>
        <position position="126"/>
    </location>
</feature>
<feature type="sequence variant" id="VAR_043080" description="In PFIC3; dbSNP:rs72552781." evidence="8">
    <original>W</original>
    <variation>R</variation>
    <location>
        <position position="138"/>
    </location>
</feature>
<feature type="sequence variant" id="VAR_043081" description="In ICP3; dbSNP:rs757693457." evidence="11">
    <original>R</original>
    <variation>K</variation>
    <location>
        <position position="150"/>
    </location>
</feature>
<feature type="sequence variant" id="VAR_073739" description="In GBD1." evidence="25">
    <original>F</original>
    <variation>S</variation>
    <location>
        <position position="154"/>
    </location>
</feature>
<feature type="sequence variant" id="VAR_043082" description="In GBD1." evidence="12 25">
    <original>F</original>
    <variation>I</variation>
    <location>
        <position position="165"/>
    </location>
</feature>
<feature type="sequence variant" id="VAR_023501" description="Found in patients with gallbladder and cholestasis; uncertain significance; dbSNP:rs58238559." evidence="9 12 13 15 16 18 23 25">
    <original>T</original>
    <variation>A</variation>
    <location>
        <position position="175"/>
    </location>
</feature>
<feature type="sequence variant" id="VAR_073740" description="In PFIC3; greatly reduced expression; alters efflux activity for PC; dbSNP:rs753318087." evidence="28">
    <original>T</original>
    <variation>M</variation>
    <location>
        <position position="201"/>
    </location>
</feature>
<feature type="sequence variant" id="VAR_020223" description="In dbSNP:rs45596335." evidence="38">
    <original>L</original>
    <variation>V</variation>
    <location>
        <position position="238"/>
    </location>
</feature>
<feature type="sequence variant" id="VAR_073741" description="In PFIC3." evidence="18">
    <original>A</original>
    <variation>P</variation>
    <location>
        <position position="250"/>
    </location>
</feature>
<feature type="sequence variant" id="VAR_030763" description="In dbSNP:rs45547936." evidence="38">
    <original>I</original>
    <variation>V</variation>
    <location>
        <position position="263"/>
    </location>
</feature>
<feature type="sequence variant" id="VAR_073742" description="In PFIC3 and GBD1; does not alter plasma membrane location; inhibits efflux activity for PC; dbSNP:rs765478923." evidence="18 23 25 30">
    <original>A</original>
    <variation>V</variation>
    <location>
        <position position="286"/>
    </location>
</feature>
<feature type="sequence variant" id="VAR_043083" description="In GBD1; dbSNP:rs72552779." evidence="12 25">
    <original>M</original>
    <variation>T</variation>
    <location>
        <position position="301"/>
    </location>
</feature>
<feature type="sequence variant" id="VAR_023502" description="In ICP3, GBD1 and PFIC3; uncertain significance; does not alter plasma membrane location; does not inhibit efflux activity for PC; dbSNP:rs72552778." evidence="9 12 13 18 21 23 25 30">
    <original>S</original>
    <variation>F</variation>
    <location>
        <position position="320"/>
    </location>
</feature>
<feature type="sequence variant" id="VAR_043084" description="In PFIC3; dbSNP:rs67876345." evidence="8">
    <original>S</original>
    <variation>I</variation>
    <location>
        <position position="346"/>
    </location>
</feature>
<feature type="sequence variant" id="VAR_073743" description="In PFIC3." evidence="18">
    <original>F</original>
    <variation>L</variation>
    <location>
        <position position="357"/>
    </location>
</feature>
<feature type="sequence variant" id="VAR_073744" description="In PFIC3." evidence="18">
    <original>A</original>
    <variation>V</variation>
    <location>
        <position position="364"/>
    </location>
</feature>
<feature type="sequence variant" id="VAR_043085" description="In dbSNP:rs1168923653." evidence="15">
    <original>I</original>
    <variation>V</variation>
    <location>
        <position position="367"/>
    </location>
</feature>
<feature type="sequence variant" id="VAR_043086" description="In PFIC3; dbSNP:rs72552777." evidence="8">
    <original>E</original>
    <variation>G</variation>
    <location>
        <position position="395"/>
    </location>
</feature>
<feature type="sequence variant" id="VAR_073745" description="In PFIC3; does not alter cytoplasmic and cell membrane location; inhibits efflux activity for PC and cholesterol; dbSNP:rs121918443." evidence="18 21 26">
    <original>Y</original>
    <variation>H</variation>
    <location>
        <position position="403"/>
    </location>
</feature>
<feature type="sequence variant" id="VAR_073746" description="In GBD1." evidence="25">
    <original>R</original>
    <variation>G</variation>
    <location>
        <position position="406"/>
    </location>
</feature>
<feature type="sequence variant" id="VAR_073747" description="Found in patients with cholangitis; uncertain significance; dbSNP:rs763807769." evidence="23">
    <original>R</original>
    <variation>Q</variation>
    <location>
        <position position="406"/>
    </location>
</feature>
<feature type="sequence variant" id="VAR_043087" description="In PFIC3; dbSNP:rs1263565476." evidence="8">
    <original>T</original>
    <variation>A</variation>
    <location>
        <position position="424"/>
    </location>
</feature>
<feature type="sequence variant" id="VAR_043088" description="In PFIC3." evidence="8">
    <original>V</original>
    <variation>M</variation>
    <location>
        <position position="425"/>
    </location>
</feature>
<feature type="sequence variant" id="VAR_043089" description="In dbSNP:rs1189003716." evidence="15">
    <original>E</original>
    <variation>G</variation>
    <location>
        <position position="450"/>
    </location>
</feature>
<feature type="sequence variant" id="VAR_073748" description="In PFIC3; retained in the reticulum endoplasmic; greatly reduced expression." evidence="28">
    <original>D</original>
    <variation>H</variation>
    <location>
        <position position="459"/>
    </location>
</feature>
<feature type="sequence variant" id="VAR_073749" description="In PFIC3." evidence="18">
    <original>V</original>
    <variation>A</variation>
    <location>
        <position position="475"/>
    </location>
</feature>
<feature type="sequence variant" id="VAR_073750" description="In PFIC3; greatly reduced expression; alters efflux activity for PC; dbSNP:rs748657435." evidence="28">
    <original>P</original>
    <variation>L</variation>
    <location>
        <position position="479"/>
    </location>
</feature>
<feature type="sequence variant" id="VAR_073751" description="In PFIC3; does not alter cytoplasmic and cell membrane location; inhibits efflux activity for PC and cholesterol." evidence="26">
    <original>L</original>
    <variation>R</variation>
    <location>
        <position position="481"/>
    </location>
</feature>
<feature type="sequence variant" id="VAR_073752" description="In GBD1; dbSNP:rs375315619." evidence="25">
    <original>N</original>
    <variation>S</variation>
    <location>
        <position position="510"/>
    </location>
</feature>
<feature type="sequence variant" id="VAR_073753" description="In PFIC3 and GBD1; dbSNP:rs1257887155." evidence="18 25">
    <original>A</original>
    <variation>T</variation>
    <location>
        <position position="511"/>
    </location>
</feature>
<feature type="sequence variant" id="VAR_073754" description="In GBD1." evidence="25">
    <original>E</original>
    <variation>K</variation>
    <location>
        <position position="513"/>
    </location>
</feature>
<feature type="sequence variant" id="VAR_043090" description="In GBD1; uncertain significance; moderate decrease of phosphatidylcholine transporter activity; does not alter plasma membrane location; dbSNP:rs8187797." evidence="12 13 23 25 32 38">
    <original>E</original>
    <variation>D</variation>
    <location>
        <position position="528"/>
    </location>
</feature>
<feature type="sequence variant" id="VAR_043091" description="In PFIC3; reduced phosphatidylcholine transporter activity; does not alter plasma membrane location; dbSNP:rs1810849139." evidence="10 31">
    <original>G</original>
    <variation>D</variation>
    <location>
        <position position="535"/>
    </location>
</feature>
<feature type="sequence variant" id="VAR_079611" description="In GBD1; loss of phosphatidylcholine transporter activity; does not alter plasma membrane location." evidence="31">
    <original>G</original>
    <variation>R</variation>
    <location>
        <position position="536"/>
    </location>
</feature>
<feature type="sequence variant" id="VAR_043092" description="In PFIC3 and GBD1; dbSNP:rs66904256." evidence="8 25">
    <original>I</original>
    <variation>F</variation>
    <location>
        <position position="541"/>
    </location>
</feature>
<feature type="sequence variant" id="VAR_073755" description="In GBD1." evidence="25">
    <original>R</original>
    <variation>H</variation>
    <location>
        <position position="545"/>
    </location>
</feature>
<feature type="sequence variant" id="VAR_023503" description="In ICP3; disruption of protein trafficking with subsequent lack of functional protein at the cell surface; dbSNP:rs121918441." evidence="7">
    <original>A</original>
    <variation>D</variation>
    <location>
        <position position="546"/>
    </location>
</feature>
<feature type="sequence variant" id="VAR_073756" description="In GBD1; dbSNP:rs761238221." evidence="25">
    <original>R</original>
    <variation>H</variation>
    <location>
        <position position="549"/>
    </location>
</feature>
<feature type="sequence variant" id="VAR_043093" description="In PFIC3." evidence="8">
    <original>L</original>
    <variation>R</variation>
    <location>
        <position position="556"/>
    </location>
</feature>
<feature type="sequence variant" id="VAR_073757" description="In PFIC3; dbSNP:rs1562975478." evidence="18">
    <original>E</original>
    <variation>K</variation>
    <location>
        <position position="558"/>
    </location>
</feature>
<feature type="sequence variant" id="VAR_043094" description="In PFIC3." evidence="8">
    <original>D</original>
    <variation>G</variation>
    <location>
        <position position="564"/>
    </location>
</feature>
<feature type="sequence variant" id="VAR_073758" description="In GBD1; requires 2 nucleotide substitutions." evidence="25">
    <original>H</original>
    <variation>T</variation>
    <location>
        <position position="589"/>
    </location>
</feature>
<feature type="sequence variant" id="VAR_043095" description="Found in patients with gallbladder and cholestasis; uncertain significance; dbSNP:rs45575636." evidence="12 15 16 18 19 25 38">
    <original>R</original>
    <variation>Q</variation>
    <location>
        <position position="590"/>
    </location>
</feature>
<feature type="sequence variant" id="VAR_043096" description="In GBD1; dbSNP:rs72552776." evidence="12 25">
    <original>L</original>
    <variation>Q</variation>
    <location>
        <position position="591"/>
    </location>
</feature>
<feature type="sequence variant" id="VAR_073759" description="In PFIC3." evidence="18">
    <original>T</original>
    <variation>A</variation>
    <location>
        <position position="593"/>
    </location>
</feature>
<feature type="sequence variant" id="VAR_073760" description="In GBD1; dbSNP:rs571555115." evidence="25">
    <original>T</original>
    <variation>M</variation>
    <location>
        <position position="593"/>
    </location>
</feature>
<feature type="sequence variant" id="VAR_073761" description="In PFIC3; dbSNP:rs372476723." evidence="18">
    <original>M</original>
    <variation>V</variation>
    <location>
        <position position="630"/>
    </location>
</feature>
<feature type="sequence variant" id="VAR_073762" description="In GBD1; dbSNP:rs972726699." evidence="25">
    <original>E</original>
    <variation>K</variation>
    <location>
        <position position="647"/>
    </location>
</feature>
<feature type="sequence variant" id="VAR_030765" description="In dbSNP:rs45476795." evidence="38">
    <original>T</original>
    <variation>N</variation>
    <location>
        <position position="651"/>
    </location>
</feature>
<feature type="sequence variant" id="VAR_020225" description="In dbSNP:rs2230028." evidence="8 11 12 13 15 16 19 21 38">
    <original>R</original>
    <variation>G</variation>
    <location>
        <position position="652"/>
    </location>
</feature>
<feature type="sequence variant" id="VAR_073763" description="In PFIC3; dbSNP:rs988987669." evidence="18">
    <original>L</original>
    <variation>P</variation>
    <location>
        <position position="701"/>
    </location>
</feature>
<feature type="sequence variant" id="VAR_043097" description="In PFIC3; dbSNP:rs72552773." evidence="8">
    <original>F</original>
    <variation>S</variation>
    <location>
        <position position="711"/>
    </location>
</feature>
<feature type="sequence variant" id="VAR_073764" description="In PFIC3; dbSNP:rs138773456." evidence="18">
    <original>T</original>
    <variation>I</variation>
    <location>
        <position position="715"/>
    </location>
</feature>
<feature type="sequence variant" id="VAR_073765" description="In PFIC3." evidence="18">
    <original>G</original>
    <variation>E</variation>
    <location>
        <position position="723"/>
    </location>
</feature>
<feature type="sequence variant" id="VAR_073766" description="In GBD1; loss of phosphatidylcholine transporter activity; does not alter plasma membrane location; dbSNP:rs141677867." evidence="25 31">
    <original>P</original>
    <variation>L</variation>
    <location>
        <position position="726"/>
    </location>
</feature>
<feature type="sequence variant" id="VAR_073767" description="In PFIC3." evidence="18">
    <original>P</original>
    <variation>T</variation>
    <location>
        <position position="726"/>
    </location>
</feature>
<feature type="sequence variant" id="VAR_073768" description="In GBD1; dbSNP:rs970324585." evidence="25">
    <original>S</original>
    <variation>L</variation>
    <location>
        <position position="729"/>
    </location>
</feature>
<feature type="sequence variant" id="VAR_073769" description="In PFIC3; dbSNP:rs147134978." evidence="18">
    <original>A</original>
    <variation>V</variation>
    <location>
        <position position="737"/>
    </location>
</feature>
<feature type="sequence variant" id="VAR_043098" evidence="12">
    <original>G</original>
    <variation>S</variation>
    <location>
        <position position="742"/>
    </location>
</feature>
<feature type="sequence variant" id="VAR_043099" description="In ICP3." evidence="13">
    <original>G</original>
    <variation>E</variation>
    <location>
        <position position="762"/>
    </location>
</feature>
<feature type="sequence variant" id="VAR_043100" description="In a heterozygous patient with risperidone-induced cholestasis." evidence="16">
    <original>I</original>
    <variation>L</variation>
    <location>
        <position position="764"/>
    </location>
</feature>
<feature type="sequence variant" id="VAR_043101" description="Found in patients with cholangitis; uncertain significance; dbSNP:rs148052192." evidence="13 18 23">
    <original>T</original>
    <variation>M</variation>
    <location>
        <position position="775"/>
    </location>
</feature>
<feature type="sequence variant" id="VAR_024359" description="In GBD1; benign; dbSNP:rs8187801." evidence="12 25 38">
    <original>R</original>
    <variation>Q</variation>
    <location>
        <position position="788"/>
    </location>
</feature>
<feature type="sequence variant" id="VAR_073770" description="In PFIC3." evidence="18">
    <original>A</original>
    <variation>D</variation>
    <location>
        <position position="840"/>
    </location>
</feature>
<feature type="sequence variant" id="VAR_043102" description="Found in patients with gallbladder and cholestasis; uncertain significance; dbSNP:rs61730509." evidence="12 25">
    <original>A</original>
    <variation>T</variation>
    <location>
        <position position="934"/>
    </location>
</feature>
<feature type="sequence variant" id="VAR_073771" description="In PFIC3; dbSNP:rs779829759." evidence="18">
    <original>G</original>
    <variation>S</variation>
    <location>
        <position position="954"/>
    </location>
</feature>
<feature type="sequence variant" id="VAR_073772" description="Found in patients with cholangitis; uncertain significance; requires 2 nucleotide substitutions." evidence="23">
    <original>V</original>
    <variation>T</variation>
    <location>
        <position position="964"/>
    </location>
</feature>
<feature type="sequence variant" id="VAR_073773" description="In GBD1; dbSNP:rs759787957." evidence="25">
    <original>L</original>
    <variation>V</variation>
    <location>
        <position position="975"/>
    </location>
</feature>
<feature type="sequence variant" id="VAR_073774" description="In PFIC3; alters efflux activity for PC; dbSNP:rs1051861187." evidence="28">
    <original>S</original>
    <variation>P</variation>
    <location>
        <position position="978"/>
    </location>
</feature>
<feature type="sequence variant" id="VAR_043103" description="In PFIC3; dbSNP:rs56187107." evidence="8">
    <original>G</original>
    <variation>S</variation>
    <location>
        <position position="983"/>
    </location>
</feature>
<feature type="sequence variant" id="VAR_043104" description="In a heterozygous patient with amoxicillin/clavulanic acid-induced cholestasis; dbSNP:rs1214110864." evidence="16">
    <original>L</original>
    <variation>Q</variation>
    <location>
        <position position="1082"/>
    </location>
</feature>
<feature type="sequence variant" id="VAR_073775" description="In GBD1; dbSNP:rs1262922848." evidence="25">
    <original>R</original>
    <variation>W</variation>
    <location>
        <position position="1084"/>
    </location>
</feature>
<feature type="sequence variant" id="VAR_073776" description="In PFIC3; alters efflux activity for PC." evidence="28">
    <original>E</original>
    <variation>K</variation>
    <location>
        <position position="1125"/>
    </location>
</feature>
<feature type="sequence variant" id="VAR_043105" description="In GBD1.">
    <location>
        <position position="1161"/>
    </location>
</feature>
<feature type="sequence variant" id="VAR_023504" description="In GBD1; reduced phosphatidylcholine transporter activity; does not alter plasma membrane location; dbSNP:rs121918442." evidence="9 12 32">
    <original>P</original>
    <variation>S</variation>
    <location>
        <position position="1168"/>
    </location>
</feature>
<feature type="sequence variant" id="VAR_079612" description="In GBD1; severely reduced phosphatidylcholine transporter activity; does not alter plasma membrane location." evidence="31">
    <original>S</original>
    <variation>L</variation>
    <location>
        <position position="1183"/>
    </location>
</feature>
<feature type="sequence variant" id="VAR_079613" description="In GBD1; loss of phosphatidylcholine transporter activity; does not alter plasma membrane location." evidence="31">
    <original>G</original>
    <variation>S</variation>
    <location>
        <position position="1185"/>
    </location>
</feature>
<feature type="sequence variant" id="VAR_073777" description="In PFIC3." evidence="18">
    <original>A</original>
    <variation>T</variation>
    <location>
        <position position="1193"/>
    </location>
</feature>
<feature type="mutagenesis site" description="Does not inhibit efflux activity for PC." evidence="29">
    <original>T</original>
    <variation>D</variation>
    <location>
        <position position="34"/>
    </location>
</feature>
<feature type="mutagenesis site" description="Reduces efflux activity for PC. Does not alter apical membrane location." evidence="29">
    <original>T</original>
    <variation>A</variation>
    <location>
        <position position="44"/>
    </location>
</feature>
<feature type="mutagenesis site" description="Reduces efflux activity for PC. Does not alter apical membrane location." evidence="29">
    <original>S</original>
    <variation>A</variation>
    <location>
        <position position="49"/>
    </location>
</feature>
<feature type="mutagenesis site" description="Inhibits efflux activity for PC and cholesterol, but does not alter glycosylation and surface expression in the presence of taurocholate." evidence="17">
    <original>K</original>
    <variation>M</variation>
    <location>
        <position position="435"/>
    </location>
</feature>
<feature type="mutagenesis site" description="Loss of floppase activity. Strongly reduce the ATPase activity." evidence="33">
    <original>E</original>
    <variation>Q</variation>
    <location>
        <position position="558"/>
    </location>
</feature>
<feature type="mutagenesis site" description="Accumulates predominantly in intracellular compartments with only a small fraction at the plasma membrane and inhibits partially the efflux activity for PC." evidence="30">
    <original>A</original>
    <variation>D</variation>
    <location>
        <position position="953"/>
    </location>
</feature>
<feature type="mutagenesis site" description="Significantly reduces phosphatidylcholine floppase activity; when associated with Q-989 and V-990." evidence="33">
    <original>V</original>
    <variation>M</variation>
    <location>
        <position position="985"/>
    </location>
</feature>
<feature type="mutagenesis site" description="Significantly reduces phosphatidylcholine floppase activity; when associated with M-985 and V-990." evidence="33">
    <original>H</original>
    <variation>Q</variation>
    <location>
        <position position="989"/>
    </location>
</feature>
<feature type="mutagenesis site" description="Significantly reduces phosphatidylcholine floppase activity; when associated with M-985 and Q-989." evidence="33">
    <original>A</original>
    <variation>V</variation>
    <location>
        <position position="990"/>
    </location>
</feature>
<feature type="mutagenesis site" description="Inhibits efflux activity for PC and cholesterol, but does not alter glycosylation and surface expression in the presence of taurocholate." evidence="17">
    <original>K</original>
    <variation>M</variation>
    <location>
        <position position="1075"/>
    </location>
</feature>
<feature type="turn" evidence="45">
    <location>
        <begin position="45"/>
        <end position="48"/>
    </location>
</feature>
<feature type="helix" evidence="45">
    <location>
        <begin position="51"/>
        <end position="68"/>
    </location>
</feature>
<feature type="helix" evidence="45">
    <location>
        <begin position="70"/>
        <end position="73"/>
    </location>
</feature>
<feature type="helix" evidence="45">
    <location>
        <begin position="75"/>
        <end position="78"/>
    </location>
</feature>
<feature type="helix" evidence="45">
    <location>
        <begin position="108"/>
        <end position="159"/>
    </location>
</feature>
<feature type="helix" evidence="45">
    <location>
        <begin position="162"/>
        <end position="167"/>
    </location>
</feature>
<feature type="helix" evidence="45">
    <location>
        <begin position="173"/>
        <end position="187"/>
    </location>
</feature>
<feature type="helix" evidence="45">
    <location>
        <begin position="190"/>
        <end position="212"/>
    </location>
</feature>
<feature type="helix" evidence="45">
    <location>
        <begin position="214"/>
        <end position="221"/>
    </location>
</feature>
<feature type="helix" evidence="45">
    <location>
        <begin position="224"/>
        <end position="261"/>
    </location>
</feature>
<feature type="helix" evidence="45">
    <location>
        <begin position="263"/>
        <end position="268"/>
    </location>
</feature>
<feature type="helix" evidence="45">
    <location>
        <begin position="272"/>
        <end position="324"/>
    </location>
</feature>
<feature type="helix" evidence="45">
    <location>
        <begin position="330"/>
        <end position="349"/>
    </location>
</feature>
<feature type="helix" evidence="45">
    <location>
        <begin position="351"/>
        <end position="372"/>
    </location>
</feature>
<feature type="strand" evidence="45">
    <location>
        <begin position="394"/>
        <end position="398"/>
    </location>
</feature>
<feature type="strand" evidence="45">
    <location>
        <begin position="404"/>
        <end position="406"/>
    </location>
</feature>
<feature type="strand" evidence="45">
    <location>
        <begin position="424"/>
        <end position="428"/>
    </location>
</feature>
<feature type="helix" evidence="45">
    <location>
        <begin position="435"/>
        <end position="442"/>
    </location>
</feature>
<feature type="strand" evidence="45">
    <location>
        <begin position="452"/>
        <end position="455"/>
    </location>
</feature>
<feature type="helix" evidence="45">
    <location>
        <begin position="460"/>
        <end position="462"/>
    </location>
</feature>
<feature type="helix" evidence="45">
    <location>
        <begin position="465"/>
        <end position="471"/>
    </location>
</feature>
<feature type="strand" evidence="45">
    <location>
        <begin position="472"/>
        <end position="475"/>
    </location>
</feature>
<feature type="strand" evidence="45">
    <location>
        <begin position="483"/>
        <end position="485"/>
    </location>
</feature>
<feature type="helix" evidence="45">
    <location>
        <begin position="486"/>
        <end position="494"/>
    </location>
</feature>
<feature type="helix" evidence="45">
    <location>
        <begin position="499"/>
        <end position="508"/>
    </location>
</feature>
<feature type="helix" evidence="45">
    <location>
        <begin position="512"/>
        <end position="517"/>
    </location>
</feature>
<feature type="strand" evidence="45">
    <location>
        <begin position="518"/>
        <end position="520"/>
    </location>
</feature>
<feature type="helix" evidence="45">
    <location>
        <begin position="521"/>
        <end position="523"/>
    </location>
</feature>
<feature type="helix" evidence="45">
    <location>
        <begin position="528"/>
        <end position="530"/>
    </location>
</feature>
<feature type="helix" evidence="45">
    <location>
        <begin position="535"/>
        <end position="547"/>
    </location>
</feature>
<feature type="strand" evidence="45">
    <location>
        <begin position="552"/>
        <end position="558"/>
    </location>
</feature>
<feature type="helix" evidence="45">
    <location>
        <begin position="565"/>
        <end position="578"/>
    </location>
</feature>
<feature type="strand" evidence="45">
    <location>
        <begin position="583"/>
        <end position="587"/>
    </location>
</feature>
<feature type="strand" evidence="45">
    <location>
        <begin position="598"/>
        <end position="604"/>
    </location>
</feature>
<feature type="strand" evidence="45">
    <location>
        <begin position="607"/>
        <end position="612"/>
    </location>
</feature>
<feature type="helix" evidence="45">
    <location>
        <begin position="614"/>
        <end position="618"/>
    </location>
</feature>
<feature type="turn" evidence="45">
    <location>
        <begin position="619"/>
        <end position="621"/>
    </location>
</feature>
<feature type="helix" evidence="45">
    <location>
        <begin position="623"/>
        <end position="628"/>
    </location>
</feature>
<feature type="helix" evidence="45">
    <location>
        <begin position="697"/>
        <end position="700"/>
    </location>
</feature>
<feature type="helix" evidence="45">
    <location>
        <begin position="708"/>
        <end position="722"/>
    </location>
</feature>
<feature type="helix" evidence="45">
    <location>
        <begin position="724"/>
        <end position="738"/>
    </location>
</feature>
<feature type="strand" evidence="45">
    <location>
        <begin position="739"/>
        <end position="742"/>
    </location>
</feature>
<feature type="strand" evidence="45">
    <location>
        <begin position="744"/>
        <end position="746"/>
    </location>
</feature>
<feature type="helix" evidence="45">
    <location>
        <begin position="747"/>
        <end position="795"/>
    </location>
</feature>
<feature type="strand" evidence="45">
    <location>
        <begin position="796"/>
        <end position="798"/>
    </location>
</feature>
<feature type="helix" evidence="45">
    <location>
        <begin position="800"/>
        <end position="804"/>
    </location>
</feature>
<feature type="helix" evidence="45">
    <location>
        <begin position="810"/>
        <end position="828"/>
    </location>
</feature>
<feature type="helix" evidence="45">
    <location>
        <begin position="831"/>
        <end position="852"/>
    </location>
</feature>
<feature type="helix" evidence="45">
    <location>
        <begin position="854"/>
        <end position="860"/>
    </location>
</feature>
<feature type="helix" evidence="45">
    <location>
        <begin position="861"/>
        <end position="863"/>
    </location>
</feature>
<feature type="helix" evidence="45">
    <location>
        <begin position="864"/>
        <end position="901"/>
    </location>
</feature>
<feature type="helix" evidence="45">
    <location>
        <begin position="903"/>
        <end position="909"/>
    </location>
</feature>
<feature type="helix" evidence="45">
    <location>
        <begin position="912"/>
        <end position="965"/>
    </location>
</feature>
<feature type="helix" evidence="45">
    <location>
        <begin position="970"/>
        <end position="1012"/>
    </location>
</feature>
<feature type="strand" evidence="45">
    <location>
        <begin position="1034"/>
        <end position="1038"/>
    </location>
</feature>
<feature type="turn" evidence="45">
    <location>
        <begin position="1045"/>
        <end position="1048"/>
    </location>
</feature>
<feature type="strand" evidence="45">
    <location>
        <begin position="1051"/>
        <end position="1053"/>
    </location>
</feature>
<feature type="strand" evidence="45">
    <location>
        <begin position="1056"/>
        <end position="1059"/>
    </location>
</feature>
<feature type="strand" evidence="45">
    <location>
        <begin position="1064"/>
        <end position="1068"/>
    </location>
</feature>
<feature type="helix" evidence="45">
    <location>
        <begin position="1075"/>
        <end position="1083"/>
    </location>
</feature>
<feature type="turn" evidence="45">
    <location>
        <begin position="1107"/>
        <end position="1109"/>
    </location>
</feature>
<feature type="helix" evidence="45">
    <location>
        <begin position="1112"/>
        <end position="1117"/>
    </location>
</feature>
<feature type="strand" evidence="45">
    <location>
        <begin position="1119"/>
        <end position="1122"/>
    </location>
</feature>
<feature type="strand" evidence="45">
    <location>
        <begin position="1130"/>
        <end position="1132"/>
    </location>
</feature>
<feature type="helix" evidence="45">
    <location>
        <begin position="1133"/>
        <end position="1138"/>
    </location>
</feature>
<feature type="helix" evidence="45">
    <location>
        <begin position="1148"/>
        <end position="1157"/>
    </location>
</feature>
<feature type="helix" evidence="45">
    <location>
        <begin position="1161"/>
        <end position="1166"/>
    </location>
</feature>
<feature type="strand" evidence="45">
    <location>
        <begin position="1167"/>
        <end position="1171"/>
    </location>
</feature>
<feature type="helix" evidence="45">
    <location>
        <begin position="1177"/>
        <end position="1179"/>
    </location>
</feature>
<feature type="helix" evidence="45">
    <location>
        <begin position="1184"/>
        <end position="1196"/>
    </location>
</feature>
<feature type="strand" evidence="45">
    <location>
        <begin position="1201"/>
        <end position="1207"/>
    </location>
</feature>
<feature type="strand" evidence="45">
    <location>
        <begin position="1209"/>
        <end position="1212"/>
    </location>
</feature>
<feature type="helix" evidence="45">
    <location>
        <begin position="1214"/>
        <end position="1227"/>
    </location>
</feature>
<feature type="strand" evidence="45">
    <location>
        <begin position="1231"/>
        <end position="1236"/>
    </location>
</feature>
<feature type="turn" evidence="45">
    <location>
        <begin position="1240"/>
        <end position="1245"/>
    </location>
</feature>
<feature type="strand" evidence="45">
    <location>
        <begin position="1247"/>
        <end position="1253"/>
    </location>
</feature>